<organismHost>
    <name type="scientific">Homo sapiens</name>
    <name type="common">Human</name>
    <dbReference type="NCBI Taxonomy" id="9606"/>
</organismHost>
<protein>
    <recommendedName>
        <fullName>Genome polyprotein</fullName>
    </recommendedName>
    <component>
        <recommendedName>
            <fullName>P1</fullName>
        </recommendedName>
    </component>
    <component>
        <recommendedName>
            <fullName>Capsid protein VP0</fullName>
        </recommendedName>
        <alternativeName>
            <fullName>VP4-VP2</fullName>
        </alternativeName>
    </component>
    <component>
        <recommendedName>
            <fullName>Capsid protein VP4</fullName>
        </recommendedName>
        <alternativeName>
            <fullName>P1A</fullName>
        </alternativeName>
        <alternativeName>
            <fullName>Virion protein 4</fullName>
        </alternativeName>
    </component>
    <component>
        <recommendedName>
            <fullName>Capsid protein VP2</fullName>
        </recommendedName>
        <alternativeName>
            <fullName>P1B</fullName>
        </alternativeName>
        <alternativeName>
            <fullName>Virion protein 2</fullName>
        </alternativeName>
    </component>
    <component>
        <recommendedName>
            <fullName>Capsid protein VP3</fullName>
        </recommendedName>
        <alternativeName>
            <fullName>P1C</fullName>
        </alternativeName>
        <alternativeName>
            <fullName>Virion protein 3</fullName>
        </alternativeName>
    </component>
    <component>
        <recommendedName>
            <fullName>Capsid protein VP1</fullName>
        </recommendedName>
        <alternativeName>
            <fullName>P1D</fullName>
        </alternativeName>
        <alternativeName>
            <fullName>Virion protein 1</fullName>
        </alternativeName>
    </component>
    <component>
        <recommendedName>
            <fullName>P2</fullName>
        </recommendedName>
    </component>
    <component>
        <recommendedName>
            <fullName>Protease 2A</fullName>
            <shortName>P2A</shortName>
            <ecNumber evidence="21">3.4.22.29</ecNumber>
        </recommendedName>
        <alternativeName>
            <fullName>Picornain 2A</fullName>
        </alternativeName>
        <alternativeName>
            <fullName>Protein 2A</fullName>
        </alternativeName>
    </component>
    <component>
        <recommendedName>
            <fullName>Protein 2B</fullName>
            <shortName>P2B</shortName>
        </recommendedName>
    </component>
    <component>
        <recommendedName>
            <fullName>Protein 2C</fullName>
            <shortName>P2C</shortName>
            <ecNumber evidence="35 53 57 61">3.6.1.15</ecNumber>
        </recommendedName>
    </component>
    <component>
        <recommendedName>
            <fullName>P3</fullName>
        </recommendedName>
    </component>
    <component>
        <recommendedName>
            <fullName>Protein 3AB</fullName>
        </recommendedName>
    </component>
    <component>
        <recommendedName>
            <fullName>Protein 3A</fullName>
            <shortName>P3A</shortName>
        </recommendedName>
    </component>
    <component>
        <recommendedName>
            <fullName>Viral protein genome-linked</fullName>
            <shortName>VPg</shortName>
        </recommendedName>
        <alternativeName>
            <fullName>Protein 3B</fullName>
            <shortName>P3B</shortName>
        </alternativeName>
    </component>
    <component>
        <recommendedName>
            <fullName>Protein 3CD</fullName>
            <ecNumber>3.4.22.28</ecNumber>
        </recommendedName>
    </component>
    <component>
        <recommendedName>
            <fullName evidence="9">Protease 3C</fullName>
            <ecNumber evidence="9 60">3.4.22.28</ecNumber>
        </recommendedName>
        <alternativeName>
            <fullName evidence="9">Picornain 3C</fullName>
            <shortName evidence="9">P3C</shortName>
        </alternativeName>
    </component>
    <component>
        <recommendedName>
            <fullName evidence="7">RNA-directed RNA polymerase</fullName>
            <shortName>RdRp</shortName>
            <ecNumber evidence="7">2.7.7.48</ecNumber>
        </recommendedName>
        <alternativeName>
            <fullName>3D polymerase</fullName>
            <shortName>3Dpol</shortName>
        </alternativeName>
        <alternativeName>
            <fullName>Protein 3D</fullName>
            <shortName>3D</shortName>
        </alternativeName>
    </component>
</protein>
<dbReference type="EC" id="3.4.22.29" evidence="21"/>
<dbReference type="EC" id="3.6.1.15" evidence="35 53 57 61"/>
<dbReference type="EC" id="3.4.22.28" evidence="9 60"/>
<dbReference type="EC" id="2.7.7.48" evidence="7"/>
<dbReference type="EMBL" id="V01149">
    <property type="protein sequence ID" value="CAA24461.1"/>
    <property type="molecule type" value="Genomic_RNA"/>
</dbReference>
<dbReference type="EMBL" id="V01148">
    <property type="protein sequence ID" value="CAA24446.1"/>
    <property type="molecule type" value="Genomic_RNA"/>
</dbReference>
<dbReference type="EMBL" id="KU866422">
    <property type="protein sequence ID" value="AMS03992.1"/>
    <property type="molecule type" value="Genomic_RNA"/>
</dbReference>
<dbReference type="PIR" id="A03898">
    <property type="entry name" value="GNNY2P"/>
</dbReference>
<dbReference type="PIR" id="A93258">
    <property type="entry name" value="GNNY1P"/>
</dbReference>
<dbReference type="RefSeq" id="NP_041277.1">
    <property type="nucleotide sequence ID" value="NC_002058.3"/>
</dbReference>
<dbReference type="PDB" id="1AL2">
    <property type="method" value="X-ray"/>
    <property type="resolution" value="2.90 A"/>
    <property type="chains" value="1=580-881, 2=70-341, 3=342-579, 4=2-69"/>
</dbReference>
<dbReference type="PDB" id="1AR6">
    <property type="method" value="X-ray"/>
    <property type="resolution" value="2.90 A"/>
    <property type="chains" value="1=580-881, 2=70-341, 3=342-579, 4=2-69"/>
</dbReference>
<dbReference type="PDB" id="1AR7">
    <property type="method" value="X-ray"/>
    <property type="resolution" value="2.90 A"/>
    <property type="chains" value="1=580-881, 2=70-341, 3=342-579, 4=2-69"/>
</dbReference>
<dbReference type="PDB" id="1AR8">
    <property type="method" value="X-ray"/>
    <property type="resolution" value="2.90 A"/>
    <property type="chains" value="1=580-881, 2=70-341, 3=342-579, 4=2-69"/>
</dbReference>
<dbReference type="PDB" id="1AR9">
    <property type="method" value="X-ray"/>
    <property type="resolution" value="2.90 A"/>
    <property type="chains" value="1=580-881, 2=70-341, 3=342-579, 4=2-69"/>
</dbReference>
<dbReference type="PDB" id="1ASJ">
    <property type="method" value="X-ray"/>
    <property type="resolution" value="2.90 A"/>
    <property type="chains" value="1=580-881, 2=70-341, 3=342-579, 4=2-69"/>
</dbReference>
<dbReference type="PDB" id="1DGI">
    <property type="method" value="EM"/>
    <property type="resolution" value="22.00 A"/>
    <property type="chains" value="1=599-881, 2=74-341, 3=342-576, 4=2-69"/>
</dbReference>
<dbReference type="PDB" id="1FPT">
    <property type="method" value="X-ray"/>
    <property type="resolution" value="3.00 A"/>
    <property type="chains" value="P=665-682"/>
</dbReference>
<dbReference type="PDB" id="1HXS">
    <property type="method" value="X-ray"/>
    <property type="resolution" value="2.20 A"/>
    <property type="chains" value="1=580-881, 2=70-341, 3=342-578, 4=2-69"/>
</dbReference>
<dbReference type="PDB" id="1L1N">
    <property type="method" value="X-ray"/>
    <property type="resolution" value="2.10 A"/>
    <property type="chains" value="A/B=1566-1748"/>
</dbReference>
<dbReference type="PDB" id="1NG7">
    <property type="method" value="NMR"/>
    <property type="chains" value="A/B=1457-1515"/>
</dbReference>
<dbReference type="PDB" id="1NN8">
    <property type="method" value="EM"/>
    <property type="resolution" value="15.00 A"/>
    <property type="chains" value="1=580-881, 2=70-341, 3=342-576, 4=2-69"/>
</dbReference>
<dbReference type="PDB" id="1PO1">
    <property type="method" value="X-ray"/>
    <property type="resolution" value="2.90 A"/>
    <property type="chains" value="1=580-881, 2=70-341, 3=342-579, 4=2-69"/>
</dbReference>
<dbReference type="PDB" id="1PO2">
    <property type="method" value="X-ray"/>
    <property type="resolution" value="2.90 A"/>
    <property type="chains" value="1=580-881, 2=70-341, 3=342-579, 4=2-69"/>
</dbReference>
<dbReference type="PDB" id="1POV">
    <property type="method" value="X-ray"/>
    <property type="resolution" value="2.80 A"/>
    <property type="chains" value="0=2-341, 1=580-881, 3=342-579"/>
</dbReference>
<dbReference type="PDB" id="1RA6">
    <property type="method" value="X-ray"/>
    <property type="resolution" value="2.00 A"/>
    <property type="chains" value="A=1749-2209"/>
</dbReference>
<dbReference type="PDB" id="1RA7">
    <property type="method" value="X-ray"/>
    <property type="resolution" value="2.35 A"/>
    <property type="chains" value="A=1749-2209"/>
</dbReference>
<dbReference type="PDB" id="1RAJ">
    <property type="method" value="X-ray"/>
    <property type="resolution" value="2.50 A"/>
    <property type="chains" value="A=1817-2209"/>
</dbReference>
<dbReference type="PDB" id="1RDR">
    <property type="method" value="X-ray"/>
    <property type="resolution" value="2.40 A"/>
    <property type="chains" value="A=1749-2209"/>
</dbReference>
<dbReference type="PDB" id="1TQL">
    <property type="method" value="X-ray"/>
    <property type="resolution" value="2.30 A"/>
    <property type="chains" value="A=1749-2209"/>
</dbReference>
<dbReference type="PDB" id="1VBD">
    <property type="method" value="X-ray"/>
    <property type="resolution" value="2.90 A"/>
    <property type="chains" value="1=580-881, 2=70-341, 3=342-579, 4=2-69"/>
</dbReference>
<dbReference type="PDB" id="1XYR">
    <property type="method" value="EM"/>
    <property type="resolution" value="11.00 A"/>
    <property type="chains" value="1=650-881, 2=97-333, 3=391-572, 5=342-353, 6=355-390, 7=82-95, 8=621-631"/>
</dbReference>
<dbReference type="PDB" id="2BBL">
    <property type="method" value="NMR"/>
    <property type="chains" value="A=1544-1565"/>
</dbReference>
<dbReference type="PDB" id="2BBP">
    <property type="method" value="NMR"/>
    <property type="chains" value="A=1544-1565"/>
</dbReference>
<dbReference type="PDB" id="2IJD">
    <property type="method" value="X-ray"/>
    <property type="resolution" value="3.40 A"/>
    <property type="chains" value="1/2=1566-2208"/>
</dbReference>
<dbReference type="PDB" id="2IJF">
    <property type="method" value="X-ray"/>
    <property type="resolution" value="3.00 A"/>
    <property type="chains" value="A=1749-2208"/>
</dbReference>
<dbReference type="PDB" id="2ILY">
    <property type="method" value="X-ray"/>
    <property type="resolution" value="2.60 A"/>
    <property type="chains" value="A=1749-2208"/>
</dbReference>
<dbReference type="PDB" id="2ILZ">
    <property type="method" value="X-ray"/>
    <property type="resolution" value="2.50 A"/>
    <property type="chains" value="A=1749-2208"/>
</dbReference>
<dbReference type="PDB" id="2IM0">
    <property type="method" value="X-ray"/>
    <property type="resolution" value="2.25 A"/>
    <property type="chains" value="A=1749-2208"/>
</dbReference>
<dbReference type="PDB" id="2IM1">
    <property type="method" value="X-ray"/>
    <property type="resolution" value="2.50 A"/>
    <property type="chains" value="A=1749-2208"/>
</dbReference>
<dbReference type="PDB" id="2IM2">
    <property type="method" value="X-ray"/>
    <property type="resolution" value="2.35 A"/>
    <property type="chains" value="A=1749-2208"/>
</dbReference>
<dbReference type="PDB" id="2IM3">
    <property type="method" value="X-ray"/>
    <property type="resolution" value="2.60 A"/>
    <property type="chains" value="A=1749-2208"/>
</dbReference>
<dbReference type="PDB" id="2PLV">
    <property type="method" value="X-ray"/>
    <property type="resolution" value="2.88 A"/>
    <property type="chains" value="1=580-881, 2=70-341, 3=342-579, 4=2-69"/>
</dbReference>
<dbReference type="PDB" id="3EPC">
    <property type="method" value="EM"/>
    <property type="resolution" value="8.00 A"/>
    <property type="chains" value="1=599-881, 2=74-341, 3=342-576, 4=2-69"/>
</dbReference>
<dbReference type="PDB" id="3IYB">
    <property type="method" value="EM"/>
    <property type="resolution" value="10.00 A"/>
    <property type="chains" value="1=647-881, 3=342-572, 4=97-341"/>
</dbReference>
<dbReference type="PDB" id="3IYC">
    <property type="method" value="EM"/>
    <property type="chains" value="1=647-881, 4=97-341"/>
</dbReference>
<dbReference type="PDB" id="3J3O">
    <property type="method" value="EM"/>
    <property type="resolution" value="11.10 A"/>
    <property type="chains" value="1=580-881, 2=70-341, 3=342-579, 4=2-69"/>
</dbReference>
<dbReference type="PDB" id="3J3P">
    <property type="method" value="EM"/>
    <property type="resolution" value="9.10 A"/>
    <property type="chains" value="1=580-881, 2=70-341, 3=342-579"/>
</dbReference>
<dbReference type="PDB" id="3J48">
    <property type="method" value="EM"/>
    <property type="resolution" value="5.50 A"/>
    <property type="chains" value="1=580-881, 2=70-341, 3=342-579"/>
</dbReference>
<dbReference type="PDB" id="3J8F">
    <property type="method" value="EM"/>
    <property type="resolution" value="3.70 A"/>
    <property type="chains" value="1=580-881, 2=70-341, 3=342-579, 4=2-69"/>
</dbReference>
<dbReference type="PDB" id="3J9F">
    <property type="method" value="EM"/>
    <property type="resolution" value="9.00 A"/>
    <property type="chains" value="1=580-881, 2=70-341, 3=342-579, 4=2-69"/>
</dbReference>
<dbReference type="PDB" id="3JBC">
    <property type="method" value="EM"/>
    <property type="resolution" value="5.60 A"/>
    <property type="chains" value="1=580-881, 2=70-341, 3=342-578, 4=2-69"/>
</dbReference>
<dbReference type="PDB" id="3JBD">
    <property type="method" value="EM"/>
    <property type="resolution" value="4.70 A"/>
    <property type="chains" value="1=580-881, 2=70-341, 3=342-578, 4=2-69"/>
</dbReference>
<dbReference type="PDB" id="3JBE">
    <property type="method" value="EM"/>
    <property type="resolution" value="4.20 A"/>
    <property type="chains" value="1=580-881, 2=70-341, 3=342-578, 4=2-69"/>
</dbReference>
<dbReference type="PDB" id="3JBF">
    <property type="method" value="EM"/>
    <property type="resolution" value="4.60 A"/>
    <property type="chains" value="1=580-881, 2=70-341, 3=342-578, 4=2-69"/>
</dbReference>
<dbReference type="PDB" id="3JBG">
    <property type="method" value="EM"/>
    <property type="resolution" value="3.80 A"/>
    <property type="chains" value="1=580-881, 2=70-341, 3=342-578, 4=2-69"/>
</dbReference>
<dbReference type="PDB" id="3OL7">
    <property type="method" value="X-ray"/>
    <property type="resolution" value="2.70 A"/>
    <property type="chains" value="A/E/I/M=1749-2209"/>
</dbReference>
<dbReference type="PDB" id="4DCD">
    <property type="method" value="X-ray"/>
    <property type="resolution" value="1.69 A"/>
    <property type="chains" value="A=1566-1748"/>
</dbReference>
<dbReference type="PDB" id="4K4S">
    <property type="method" value="X-ray"/>
    <property type="resolution" value="2.40 A"/>
    <property type="chains" value="A/E=1749-2209"/>
</dbReference>
<dbReference type="PDB" id="4K4T">
    <property type="method" value="X-ray"/>
    <property type="resolution" value="2.75 A"/>
    <property type="chains" value="A/E=1749-2209"/>
</dbReference>
<dbReference type="PDB" id="4K4U">
    <property type="method" value="X-ray"/>
    <property type="resolution" value="2.85 A"/>
    <property type="chains" value="A/E=1749-2209"/>
</dbReference>
<dbReference type="PDB" id="4K4V">
    <property type="method" value="X-ray"/>
    <property type="resolution" value="2.63 A"/>
    <property type="chains" value="A/E=1749-2209"/>
</dbReference>
<dbReference type="PDB" id="4K4W">
    <property type="method" value="X-ray"/>
    <property type="resolution" value="2.69 A"/>
    <property type="chains" value="A/E=1749-2209"/>
</dbReference>
<dbReference type="PDB" id="4NLO">
    <property type="method" value="X-ray"/>
    <property type="resolution" value="2.20 A"/>
    <property type="chains" value="A=1749-2209"/>
</dbReference>
<dbReference type="PDB" id="4NLP">
    <property type="method" value="X-ray"/>
    <property type="resolution" value="2.20 A"/>
    <property type="chains" value="A=1749-2209"/>
</dbReference>
<dbReference type="PDB" id="4NLQ">
    <property type="method" value="X-ray"/>
    <property type="resolution" value="2.30 A"/>
    <property type="chains" value="A=1749-2209"/>
</dbReference>
<dbReference type="PDB" id="4NLR">
    <property type="method" value="X-ray"/>
    <property type="resolution" value="2.00 A"/>
    <property type="chains" value="A=1749-2209"/>
</dbReference>
<dbReference type="PDB" id="4NLS">
    <property type="method" value="X-ray"/>
    <property type="resolution" value="2.00 A"/>
    <property type="chains" value="A=1749-2209"/>
</dbReference>
<dbReference type="PDB" id="4NLT">
    <property type="method" value="X-ray"/>
    <property type="resolution" value="2.50 A"/>
    <property type="chains" value="A=1749-2209"/>
</dbReference>
<dbReference type="PDB" id="4NLU">
    <property type="method" value="X-ray"/>
    <property type="resolution" value="2.10 A"/>
    <property type="chains" value="A=1749-2209"/>
</dbReference>
<dbReference type="PDB" id="4NLV">
    <property type="method" value="X-ray"/>
    <property type="resolution" value="2.30 A"/>
    <property type="chains" value="A=1749-2209"/>
</dbReference>
<dbReference type="PDB" id="4NLW">
    <property type="method" value="X-ray"/>
    <property type="resolution" value="2.10 A"/>
    <property type="chains" value="A=1749-2209"/>
</dbReference>
<dbReference type="PDB" id="4NLX">
    <property type="method" value="X-ray"/>
    <property type="resolution" value="2.60 A"/>
    <property type="chains" value="A=1749-2209"/>
</dbReference>
<dbReference type="PDB" id="4NLY">
    <property type="method" value="X-ray"/>
    <property type="resolution" value="2.30 A"/>
    <property type="chains" value="A=1749-2209"/>
</dbReference>
<dbReference type="PDB" id="4R0E">
    <property type="method" value="X-ray"/>
    <property type="resolution" value="3.00 A"/>
    <property type="chains" value="A=1749-2209"/>
</dbReference>
<dbReference type="PDB" id="5KTZ">
    <property type="method" value="EM"/>
    <property type="resolution" value="4.30 A"/>
    <property type="chains" value="1=636-858, 2=70-338, 3=342-572"/>
</dbReference>
<dbReference type="PDB" id="5KU0">
    <property type="method" value="EM"/>
    <property type="resolution" value="4.20 A"/>
    <property type="chains" value="1=636-858, 2=70-338, 3=342-572"/>
</dbReference>
<dbReference type="PDB" id="5KU2">
    <property type="method" value="EM"/>
    <property type="resolution" value="4.50 A"/>
    <property type="chains" value="1=650-858, 2=70-337, 3=342-571"/>
</dbReference>
<dbReference type="PDB" id="5KWL">
    <property type="method" value="EM"/>
    <property type="resolution" value="4.50 A"/>
    <property type="chains" value="1=650-858, 2=70-337, 3=342-571"/>
</dbReference>
<dbReference type="PDB" id="5Z3Q">
    <property type="method" value="X-ray"/>
    <property type="resolution" value="2.54 A"/>
    <property type="chains" value="A/B/C/D/E/H=1243-1456"/>
</dbReference>
<dbReference type="PDB" id="6HLV">
    <property type="method" value="X-ray"/>
    <property type="resolution" value="2.50 A"/>
    <property type="chains" value="B=1457-1514"/>
</dbReference>
<dbReference type="PDB" id="6P9O">
    <property type="method" value="EM"/>
    <property type="resolution" value="2.90 A"/>
    <property type="chains" value="1=580-881, 2=70-341"/>
</dbReference>
<dbReference type="PDB" id="6P9W">
    <property type="method" value="EM"/>
    <property type="resolution" value="3.20 A"/>
    <property type="chains" value="1=580-881, 2=70-341"/>
</dbReference>
<dbReference type="PDB" id="6PSZ">
    <property type="method" value="EM"/>
    <property type="resolution" value="3.20 A"/>
    <property type="chains" value="1=580-881, 2=70-341"/>
</dbReference>
<dbReference type="PDB" id="9FQ2">
    <property type="method" value="X-ray"/>
    <property type="resolution" value="2.37 A"/>
    <property type="chains" value="A/B=1566-1748"/>
</dbReference>
<dbReference type="PDBsum" id="1AL2"/>
<dbReference type="PDBsum" id="1AR6"/>
<dbReference type="PDBsum" id="1AR7"/>
<dbReference type="PDBsum" id="1AR8"/>
<dbReference type="PDBsum" id="1AR9"/>
<dbReference type="PDBsum" id="1ASJ"/>
<dbReference type="PDBsum" id="1DGI"/>
<dbReference type="PDBsum" id="1FPT"/>
<dbReference type="PDBsum" id="1HXS"/>
<dbReference type="PDBsum" id="1L1N"/>
<dbReference type="PDBsum" id="1NG7"/>
<dbReference type="PDBsum" id="1NN8"/>
<dbReference type="PDBsum" id="1PO1"/>
<dbReference type="PDBsum" id="1PO2"/>
<dbReference type="PDBsum" id="1POV"/>
<dbReference type="PDBsum" id="1RA6"/>
<dbReference type="PDBsum" id="1RA7"/>
<dbReference type="PDBsum" id="1RAJ"/>
<dbReference type="PDBsum" id="1RDR"/>
<dbReference type="PDBsum" id="1TQL"/>
<dbReference type="PDBsum" id="1VBD"/>
<dbReference type="PDBsum" id="1XYR"/>
<dbReference type="PDBsum" id="2BBL"/>
<dbReference type="PDBsum" id="2BBP"/>
<dbReference type="PDBsum" id="2IJD"/>
<dbReference type="PDBsum" id="2IJF"/>
<dbReference type="PDBsum" id="2ILY"/>
<dbReference type="PDBsum" id="2ILZ"/>
<dbReference type="PDBsum" id="2IM0"/>
<dbReference type="PDBsum" id="2IM1"/>
<dbReference type="PDBsum" id="2IM2"/>
<dbReference type="PDBsum" id="2IM3"/>
<dbReference type="PDBsum" id="2PLV"/>
<dbReference type="PDBsum" id="3EPC"/>
<dbReference type="PDBsum" id="3IYB"/>
<dbReference type="PDBsum" id="3IYC"/>
<dbReference type="PDBsum" id="3J3O"/>
<dbReference type="PDBsum" id="3J3P"/>
<dbReference type="PDBsum" id="3J48"/>
<dbReference type="PDBsum" id="3J8F"/>
<dbReference type="PDBsum" id="3J9F"/>
<dbReference type="PDBsum" id="3JBC"/>
<dbReference type="PDBsum" id="3JBD"/>
<dbReference type="PDBsum" id="3JBE"/>
<dbReference type="PDBsum" id="3JBF"/>
<dbReference type="PDBsum" id="3JBG"/>
<dbReference type="PDBsum" id="3OL7"/>
<dbReference type="PDBsum" id="4DCD"/>
<dbReference type="PDBsum" id="4K4S"/>
<dbReference type="PDBsum" id="4K4T"/>
<dbReference type="PDBsum" id="4K4U"/>
<dbReference type="PDBsum" id="4K4V"/>
<dbReference type="PDBsum" id="4K4W"/>
<dbReference type="PDBsum" id="4NLO"/>
<dbReference type="PDBsum" id="4NLP"/>
<dbReference type="PDBsum" id="4NLQ"/>
<dbReference type="PDBsum" id="4NLR"/>
<dbReference type="PDBsum" id="4NLS"/>
<dbReference type="PDBsum" id="4NLT"/>
<dbReference type="PDBsum" id="4NLU"/>
<dbReference type="PDBsum" id="4NLV"/>
<dbReference type="PDBsum" id="4NLW"/>
<dbReference type="PDBsum" id="4NLX"/>
<dbReference type="PDBsum" id="4NLY"/>
<dbReference type="PDBsum" id="4R0E"/>
<dbReference type="PDBsum" id="5KTZ"/>
<dbReference type="PDBsum" id="5KU0"/>
<dbReference type="PDBsum" id="5KU2"/>
<dbReference type="PDBsum" id="5KWL"/>
<dbReference type="PDBsum" id="5Z3Q"/>
<dbReference type="PDBsum" id="6HLV"/>
<dbReference type="PDBsum" id="6P9O"/>
<dbReference type="PDBsum" id="6P9W"/>
<dbReference type="PDBsum" id="6PSZ"/>
<dbReference type="PDBsum" id="9FQ2"/>
<dbReference type="BMRB" id="P03300"/>
<dbReference type="EMDB" id="EMD-20275"/>
<dbReference type="EMDB" id="EMD-20276"/>
<dbReference type="EMDB" id="EMD-20469"/>
<dbReference type="EMDB" id="EMD-27943"/>
<dbReference type="EMDB" id="EMD-50064"/>
<dbReference type="EMDB" id="EMD-50066"/>
<dbReference type="EMDB" id="EMD-50112"/>
<dbReference type="EMDB" id="EMD-50176"/>
<dbReference type="EMDB" id="EMD-8284"/>
<dbReference type="EMDB" id="EMD-8285"/>
<dbReference type="EMDB" id="EMD-8286"/>
<dbReference type="SMR" id="P03300"/>
<dbReference type="ELM" id="P03300"/>
<dbReference type="IntAct" id="P03300">
    <property type="interactions" value="5"/>
</dbReference>
<dbReference type="BindingDB" id="P03300"/>
<dbReference type="ChEMBL" id="CHEMBL5127"/>
<dbReference type="DrugBank" id="DB08014">
    <property type="generic name" value="(METHYLPYRIDAZINE PIPERIDINE BUTYLOXYPHENYL)ETHYLACETATE"/>
</dbReference>
<dbReference type="DrugBank" id="DB08013">
    <property type="generic name" value="(METHYLPYRIDAZINE PIPERIDINE PROPYLOXYPHENYL)ETHYLACETATE"/>
</dbReference>
<dbReference type="DrugBank" id="DB04137">
    <property type="generic name" value="Guanosine-5'-Triphosphate"/>
</dbReference>
<dbReference type="DrugBank" id="DB08231">
    <property type="generic name" value="Myristic acid"/>
</dbReference>
<dbReference type="DrugBank" id="DB08012">
    <property type="generic name" value="Pirodavir"/>
</dbReference>
<dbReference type="DrugBank" id="DB03963">
    <property type="generic name" value="S-(Dimethylarsenic)Cysteine"/>
</dbReference>
<dbReference type="DrugBank" id="DB03203">
    <property type="generic name" value="Sphingosine"/>
</dbReference>
<dbReference type="MEROPS" id="C03.001"/>
<dbReference type="MEROPS" id="C03.020"/>
<dbReference type="MEROPS" id="N08.001"/>
<dbReference type="iPTMnet" id="P03300"/>
<dbReference type="ABCD" id="P03300">
    <property type="antibodies" value="10 sequenced antibodies"/>
</dbReference>
<dbReference type="DNASU" id="919920"/>
<dbReference type="GeneID" id="919920"/>
<dbReference type="KEGG" id="vg:919920"/>
<dbReference type="EvolutionaryTrace" id="P03300"/>
<dbReference type="Proteomes" id="UP000000356">
    <property type="component" value="Genome"/>
</dbReference>
<dbReference type="Proteomes" id="UP000138192">
    <property type="component" value="Genome"/>
</dbReference>
<dbReference type="Proteomes" id="UP000149468">
    <property type="component" value="Genome"/>
</dbReference>
<dbReference type="GO" id="GO:0044162">
    <property type="term" value="C:host cell cytoplasmic vesicle membrane"/>
    <property type="evidence" value="ECO:0007669"/>
    <property type="project" value="UniProtKB-SubCell"/>
</dbReference>
<dbReference type="GO" id="GO:0042025">
    <property type="term" value="C:host cell nucleus"/>
    <property type="evidence" value="ECO:0007669"/>
    <property type="project" value="UniProtKB-SubCell"/>
</dbReference>
<dbReference type="GO" id="GO:0016020">
    <property type="term" value="C:membrane"/>
    <property type="evidence" value="ECO:0007669"/>
    <property type="project" value="UniProtKB-KW"/>
</dbReference>
<dbReference type="GO" id="GO:0039618">
    <property type="term" value="C:T=pseudo3 icosahedral viral capsid"/>
    <property type="evidence" value="ECO:0007669"/>
    <property type="project" value="UniProtKB-KW"/>
</dbReference>
<dbReference type="GO" id="GO:0005524">
    <property type="term" value="F:ATP binding"/>
    <property type="evidence" value="ECO:0007669"/>
    <property type="project" value="UniProtKB-KW"/>
</dbReference>
<dbReference type="GO" id="GO:0015267">
    <property type="term" value="F:channel activity"/>
    <property type="evidence" value="ECO:0007669"/>
    <property type="project" value="UniProtKB-KW"/>
</dbReference>
<dbReference type="GO" id="GO:0004197">
    <property type="term" value="F:cysteine-type endopeptidase activity"/>
    <property type="evidence" value="ECO:0007669"/>
    <property type="project" value="UniProtKB-EC"/>
</dbReference>
<dbReference type="GO" id="GO:0017111">
    <property type="term" value="F:ribonucleoside triphosphate phosphatase activity"/>
    <property type="evidence" value="ECO:0007669"/>
    <property type="project" value="UniProtKB-EC"/>
</dbReference>
<dbReference type="GO" id="GO:0003723">
    <property type="term" value="F:RNA binding"/>
    <property type="evidence" value="ECO:0007669"/>
    <property type="project" value="UniProtKB-KW"/>
</dbReference>
<dbReference type="GO" id="GO:0003724">
    <property type="term" value="F:RNA helicase activity"/>
    <property type="evidence" value="ECO:0007669"/>
    <property type="project" value="InterPro"/>
</dbReference>
<dbReference type="GO" id="GO:0003968">
    <property type="term" value="F:RNA-directed RNA polymerase activity"/>
    <property type="evidence" value="ECO:0000314"/>
    <property type="project" value="CACAO"/>
</dbReference>
<dbReference type="GO" id="GO:0005198">
    <property type="term" value="F:structural molecule activity"/>
    <property type="evidence" value="ECO:0007669"/>
    <property type="project" value="InterPro"/>
</dbReference>
<dbReference type="GO" id="GO:0008270">
    <property type="term" value="F:zinc ion binding"/>
    <property type="evidence" value="ECO:0007669"/>
    <property type="project" value="UniProtKB-KW"/>
</dbReference>
<dbReference type="GO" id="GO:0006351">
    <property type="term" value="P:DNA-templated transcription"/>
    <property type="evidence" value="ECO:0007669"/>
    <property type="project" value="InterPro"/>
</dbReference>
<dbReference type="GO" id="GO:0075509">
    <property type="term" value="P:endocytosis involved in viral entry into host cell"/>
    <property type="evidence" value="ECO:0007669"/>
    <property type="project" value="UniProtKB-KW"/>
</dbReference>
<dbReference type="GO" id="GO:0034220">
    <property type="term" value="P:monoatomic ion transmembrane transport"/>
    <property type="evidence" value="ECO:0007669"/>
    <property type="project" value="UniProtKB-KW"/>
</dbReference>
<dbReference type="GO" id="GO:0006508">
    <property type="term" value="P:proteolysis"/>
    <property type="evidence" value="ECO:0007669"/>
    <property type="project" value="UniProtKB-KW"/>
</dbReference>
<dbReference type="GO" id="GO:0044694">
    <property type="term" value="P:symbiont genome entry into host cell via pore formation in plasma membrane"/>
    <property type="evidence" value="ECO:0007669"/>
    <property type="project" value="UniProtKB-KW"/>
</dbReference>
<dbReference type="GO" id="GO:0039520">
    <property type="term" value="P:symbiont-mediated activation of host autophagy"/>
    <property type="evidence" value="ECO:0000314"/>
    <property type="project" value="UniProtKB"/>
</dbReference>
<dbReference type="GO" id="GO:0039545">
    <property type="term" value="P:symbiont-mediated suppression of host cytoplasmic pattern recognition receptor signaling pathway via inhibition of MAVS activity"/>
    <property type="evidence" value="ECO:0007669"/>
    <property type="project" value="UniProtKB-KW"/>
</dbReference>
<dbReference type="GO" id="GO:0039554">
    <property type="term" value="P:symbiont-mediated suppression of host cytoplasmic pattern recognition receptor signaling pathway via inhibition of MDA-5 activity"/>
    <property type="evidence" value="ECO:0007669"/>
    <property type="project" value="UniProtKB-KW"/>
</dbReference>
<dbReference type="GO" id="GO:0039540">
    <property type="term" value="P:symbiont-mediated suppression of host cytoplasmic pattern recognition receptor signaling pathway via inhibition of RIG-I activity"/>
    <property type="evidence" value="ECO:0007669"/>
    <property type="project" value="UniProtKB-KW"/>
</dbReference>
<dbReference type="GO" id="GO:0039522">
    <property type="term" value="P:symbiont-mediated suppression of host mRNA export from nucleus"/>
    <property type="evidence" value="ECO:0007669"/>
    <property type="project" value="UniProtKB-KW"/>
</dbReference>
<dbReference type="GO" id="GO:0039606">
    <property type="term" value="P:symbiont-mediated suppression of host translation initiation"/>
    <property type="evidence" value="ECO:0000314"/>
    <property type="project" value="UniProtKB"/>
</dbReference>
<dbReference type="GO" id="GO:0039694">
    <property type="term" value="P:viral RNA genome replication"/>
    <property type="evidence" value="ECO:0007669"/>
    <property type="project" value="InterPro"/>
</dbReference>
<dbReference type="GO" id="GO:0019062">
    <property type="term" value="P:virion attachment to host cell"/>
    <property type="evidence" value="ECO:0007669"/>
    <property type="project" value="UniProtKB-KW"/>
</dbReference>
<dbReference type="CDD" id="cd23213">
    <property type="entry name" value="Enterovirus_RdRp"/>
    <property type="match status" value="1"/>
</dbReference>
<dbReference type="CDD" id="cd00205">
    <property type="entry name" value="rhv_like"/>
    <property type="match status" value="3"/>
</dbReference>
<dbReference type="FunFam" id="1.20.960.20:FF:000001">
    <property type="entry name" value="Genome polyprotein"/>
    <property type="match status" value="1"/>
</dbReference>
<dbReference type="FunFam" id="2.40.10.10:FF:000018">
    <property type="entry name" value="Genome polyprotein"/>
    <property type="match status" value="1"/>
</dbReference>
<dbReference type="FunFam" id="2.40.10.10:FF:000020">
    <property type="entry name" value="Genome polyprotein"/>
    <property type="match status" value="1"/>
</dbReference>
<dbReference type="FunFam" id="2.40.10.10:FF:000022">
    <property type="entry name" value="Genome polyprotein"/>
    <property type="match status" value="1"/>
</dbReference>
<dbReference type="FunFam" id="2.60.120.20:FF:000001">
    <property type="entry name" value="Genome polyprotein"/>
    <property type="match status" value="1"/>
</dbReference>
<dbReference type="FunFam" id="2.60.120.20:FF:000002">
    <property type="entry name" value="Genome polyprotein"/>
    <property type="match status" value="1"/>
</dbReference>
<dbReference type="FunFam" id="2.60.120.20:FF:000003">
    <property type="entry name" value="Genome polyprotein"/>
    <property type="match status" value="1"/>
</dbReference>
<dbReference type="FunFam" id="3.30.70.270:FF:000008">
    <property type="entry name" value="Genome polyprotein"/>
    <property type="match status" value="1"/>
</dbReference>
<dbReference type="FunFam" id="4.10.880.10:FF:000001">
    <property type="entry name" value="Genome polyprotein"/>
    <property type="match status" value="1"/>
</dbReference>
<dbReference type="FunFam" id="4.10.880.10:FF:000002">
    <property type="entry name" value="Genome polyprotein"/>
    <property type="match status" value="1"/>
</dbReference>
<dbReference type="Gene3D" id="1.20.960.20">
    <property type="match status" value="1"/>
</dbReference>
<dbReference type="Gene3D" id="2.60.120.20">
    <property type="match status" value="3"/>
</dbReference>
<dbReference type="Gene3D" id="3.30.70.270">
    <property type="match status" value="1"/>
</dbReference>
<dbReference type="Gene3D" id="6.10.20.20">
    <property type="entry name" value="Poliovirus 3A protein-like"/>
    <property type="match status" value="1"/>
</dbReference>
<dbReference type="Gene3D" id="4.10.880.10">
    <property type="entry name" value="Poliovirus 3D polymerase Domain 1 (Nucleotidyltransferase)"/>
    <property type="match status" value="2"/>
</dbReference>
<dbReference type="Gene3D" id="2.40.10.10">
    <property type="entry name" value="Trypsin-like serine proteases"/>
    <property type="match status" value="4"/>
</dbReference>
<dbReference type="InterPro" id="IPR043502">
    <property type="entry name" value="DNA/RNA_pol_sf"/>
</dbReference>
<dbReference type="InterPro" id="IPR000605">
    <property type="entry name" value="Helicase_SF3_ssDNA/RNA_vir"/>
</dbReference>
<dbReference type="InterPro" id="IPR014759">
    <property type="entry name" value="Helicase_SF3_ssRNA_vir"/>
</dbReference>
<dbReference type="InterPro" id="IPR027417">
    <property type="entry name" value="P-loop_NTPase"/>
</dbReference>
<dbReference type="InterPro" id="IPR014838">
    <property type="entry name" value="P3A"/>
</dbReference>
<dbReference type="InterPro" id="IPR036203">
    <property type="entry name" value="P3A_soluble_dom"/>
</dbReference>
<dbReference type="InterPro" id="IPR044067">
    <property type="entry name" value="PCV_3C_PRO"/>
</dbReference>
<dbReference type="InterPro" id="IPR000081">
    <property type="entry name" value="Peptidase_C3"/>
</dbReference>
<dbReference type="InterPro" id="IPR000199">
    <property type="entry name" value="Peptidase_C3A/C3B_picornavir"/>
</dbReference>
<dbReference type="InterPro" id="IPR009003">
    <property type="entry name" value="Peptidase_S1_PA"/>
</dbReference>
<dbReference type="InterPro" id="IPR043504">
    <property type="entry name" value="Peptidase_S1_PA_chymotrypsin"/>
</dbReference>
<dbReference type="InterPro" id="IPR003138">
    <property type="entry name" value="Pico_P1A"/>
</dbReference>
<dbReference type="InterPro" id="IPR002527">
    <property type="entry name" value="Pico_P2B"/>
</dbReference>
<dbReference type="InterPro" id="IPR001676">
    <property type="entry name" value="Picornavirus_capsid"/>
</dbReference>
<dbReference type="InterPro" id="IPR043128">
    <property type="entry name" value="Rev_trsase/Diguanyl_cyclase"/>
</dbReference>
<dbReference type="InterPro" id="IPR033703">
    <property type="entry name" value="Rhv-like"/>
</dbReference>
<dbReference type="InterPro" id="IPR001205">
    <property type="entry name" value="RNA-dir_pol_C"/>
</dbReference>
<dbReference type="InterPro" id="IPR007094">
    <property type="entry name" value="RNA-dir_pol_PSvirus"/>
</dbReference>
<dbReference type="InterPro" id="IPR029053">
    <property type="entry name" value="Viral_coat"/>
</dbReference>
<dbReference type="Pfam" id="PF08727">
    <property type="entry name" value="P3A"/>
    <property type="match status" value="1"/>
</dbReference>
<dbReference type="Pfam" id="PF00548">
    <property type="entry name" value="Peptidase_C3"/>
    <property type="match status" value="1"/>
</dbReference>
<dbReference type="Pfam" id="PF02226">
    <property type="entry name" value="Pico_P1A"/>
    <property type="match status" value="1"/>
</dbReference>
<dbReference type="Pfam" id="PF00947">
    <property type="entry name" value="Pico_P2A"/>
    <property type="match status" value="1"/>
</dbReference>
<dbReference type="Pfam" id="PF01552">
    <property type="entry name" value="Pico_P2B"/>
    <property type="match status" value="1"/>
</dbReference>
<dbReference type="Pfam" id="PF00680">
    <property type="entry name" value="RdRP_1"/>
    <property type="match status" value="1"/>
</dbReference>
<dbReference type="Pfam" id="PF00073">
    <property type="entry name" value="Rhv"/>
    <property type="match status" value="3"/>
</dbReference>
<dbReference type="Pfam" id="PF00910">
    <property type="entry name" value="RNA_helicase"/>
    <property type="match status" value="1"/>
</dbReference>
<dbReference type="SUPFAM" id="SSF56672">
    <property type="entry name" value="DNA/RNA polymerases"/>
    <property type="match status" value="1"/>
</dbReference>
<dbReference type="SUPFAM" id="SSF52540">
    <property type="entry name" value="P-loop containing nucleoside triphosphate hydrolases"/>
    <property type="match status" value="1"/>
</dbReference>
<dbReference type="SUPFAM" id="SSF88633">
    <property type="entry name" value="Positive stranded ssRNA viruses"/>
    <property type="match status" value="2"/>
</dbReference>
<dbReference type="SUPFAM" id="SSF89043">
    <property type="entry name" value="Soluble domain of poliovirus core protein 3a"/>
    <property type="match status" value="1"/>
</dbReference>
<dbReference type="SUPFAM" id="SSF50494">
    <property type="entry name" value="Trypsin-like serine proteases"/>
    <property type="match status" value="2"/>
</dbReference>
<dbReference type="PROSITE" id="PS51874">
    <property type="entry name" value="PCV_3C_PRO"/>
    <property type="match status" value="1"/>
</dbReference>
<dbReference type="PROSITE" id="PS50507">
    <property type="entry name" value="RDRP_SSRNA_POS"/>
    <property type="match status" value="1"/>
</dbReference>
<dbReference type="PROSITE" id="PS51218">
    <property type="entry name" value="SF3_HELICASE_2"/>
    <property type="match status" value="1"/>
</dbReference>
<feature type="initiator methionine" description="Removed; by host" evidence="31">
    <location>
        <position position="1"/>
    </location>
</feature>
<feature type="chain" id="PRO_0000424686" description="Genome polyprotein">
    <location>
        <begin position="2"/>
        <end position="2209"/>
    </location>
</feature>
<feature type="chain" id="PRO_0000424687" description="P1">
    <location>
        <begin position="2"/>
        <end position="881"/>
    </location>
</feature>
<feature type="chain" id="PRO_0000424688" description="Capsid protein VP0">
    <location>
        <begin position="2"/>
        <end position="341"/>
    </location>
</feature>
<feature type="chain" id="PRO_0000040080" description="Capsid protein VP4">
    <location>
        <begin position="2"/>
        <end position="69"/>
    </location>
</feature>
<feature type="chain" id="PRO_0000040081" description="Capsid protein VP2">
    <location>
        <begin position="70"/>
        <end position="341"/>
    </location>
</feature>
<feature type="chain" id="PRO_0000040082" description="Capsid protein VP3">
    <location>
        <begin position="342"/>
        <end position="579"/>
    </location>
</feature>
<feature type="chain" id="PRO_0000040083" description="Capsid protein VP1">
    <location>
        <begin position="580"/>
        <end position="881"/>
    </location>
</feature>
<feature type="chain" id="PRO_0000424689" description="P2">
    <location>
        <begin position="882"/>
        <end position="1456"/>
    </location>
</feature>
<feature type="chain" id="PRO_0000040084" description="Protease 2A">
    <location>
        <begin position="882"/>
        <end position="1030"/>
    </location>
</feature>
<feature type="chain" id="PRO_0000040085" description="Protein 2B">
    <location>
        <begin position="1031"/>
        <end position="1127"/>
    </location>
</feature>
<feature type="chain" id="PRO_0000040086" description="Protein 2C">
    <location>
        <begin position="1128"/>
        <end position="1456"/>
    </location>
</feature>
<feature type="chain" id="PRO_0000424690" description="P3">
    <location>
        <begin position="1457"/>
        <end position="2209"/>
    </location>
</feature>
<feature type="chain" id="PRO_0000424691" description="Protein 3AB">
    <location>
        <begin position="1457"/>
        <end position="1565"/>
    </location>
</feature>
<feature type="chain" id="PRO_0000424692" description="Protein 3A">
    <location>
        <begin position="1457"/>
        <end position="1543"/>
    </location>
</feature>
<feature type="chain" id="PRO_0000040088" description="Viral protein genome-linked">
    <location>
        <begin position="1544"/>
        <end position="1565"/>
    </location>
</feature>
<feature type="chain" id="PRO_0000424693" description="Protein 3CD">
    <location>
        <begin position="1566"/>
        <end position="2209"/>
    </location>
</feature>
<feature type="chain" id="PRO_0000040089" description="Protease 3C">
    <location>
        <begin position="1566"/>
        <end position="1748"/>
    </location>
</feature>
<feature type="chain" id="PRO_0000040090" description="RNA-directed RNA polymerase">
    <location>
        <begin position="1749"/>
        <end position="2209"/>
    </location>
</feature>
<feature type="topological domain" description="Cytoplasmic" evidence="6">
    <location>
        <begin position="2"/>
        <end position="1520"/>
    </location>
</feature>
<feature type="intramembrane region" evidence="6">
    <location>
        <begin position="1521"/>
        <end position="1536"/>
    </location>
</feature>
<feature type="topological domain" description="Cytoplasmic" evidence="6">
    <location>
        <begin position="1537"/>
        <end position="2209"/>
    </location>
</feature>
<feature type="domain" description="SF3 helicase" evidence="8">
    <location>
        <begin position="1232"/>
        <end position="1388"/>
    </location>
</feature>
<feature type="domain" description="Peptidase C3" evidence="9">
    <location>
        <begin position="1566"/>
        <end position="1744"/>
    </location>
</feature>
<feature type="domain" description="RdRp catalytic" evidence="7">
    <location>
        <begin position="1975"/>
        <end position="2090"/>
    </location>
</feature>
<feature type="zinc finger region" description="C4-type" evidence="53">
    <location>
        <begin position="1396"/>
        <end position="1413"/>
    </location>
</feature>
<feature type="region of interest" description="Amphipathic alpha-helix" evidence="6">
    <location>
        <begin position="580"/>
        <end position="600"/>
    </location>
</feature>
<feature type="region of interest" description="Disordered" evidence="10">
    <location>
        <begin position="599"/>
        <end position="619"/>
    </location>
</feature>
<feature type="region of interest" description="Oligomerization" evidence="35">
    <location>
        <begin position="1128"/>
        <end position="1266"/>
    </location>
</feature>
<feature type="region of interest" description="Membrane-binding" evidence="63">
    <location>
        <begin position="1128"/>
        <end position="1200"/>
    </location>
</feature>
<feature type="region of interest" description="RNA-binding" evidence="57">
    <location>
        <begin position="1149"/>
        <end position="1153"/>
    </location>
</feature>
<feature type="region of interest" description="RNA-binding" evidence="57">
    <location>
        <begin position="1440"/>
        <end position="1447"/>
    </location>
</feature>
<feature type="region of interest" description="Oligomerization" evidence="53">
    <location>
        <begin position="1451"/>
        <end position="1456"/>
    </location>
</feature>
<feature type="active site" description="For protease 2A activity" evidence="21">
    <location>
        <position position="901"/>
    </location>
</feature>
<feature type="active site" description="For protease 2A activity" evidence="21">
    <location>
        <position position="919"/>
    </location>
</feature>
<feature type="active site" description="For protease 2A activity" evidence="21">
    <location>
        <position position="990"/>
    </location>
</feature>
<feature type="active site" description="For protease 3C activity" evidence="9">
    <location>
        <position position="1605"/>
    </location>
</feature>
<feature type="active site" description="For protease 3C activity" evidence="9 60">
    <location>
        <position position="1636"/>
    </location>
</feature>
<feature type="active site" description="For protease 3C activity" evidence="9 60">
    <location>
        <position position="1712"/>
    </location>
</feature>
<feature type="binding site" evidence="66">
    <location>
        <position position="936"/>
    </location>
    <ligand>
        <name>Zn(2+)</name>
        <dbReference type="ChEBI" id="CHEBI:29105"/>
        <label>1</label>
        <note>structural</note>
    </ligand>
</feature>
<feature type="binding site" evidence="66">
    <location>
        <position position="938"/>
    </location>
    <ligand>
        <name>Zn(2+)</name>
        <dbReference type="ChEBI" id="CHEBI:29105"/>
        <label>1</label>
        <note>structural</note>
    </ligand>
</feature>
<feature type="binding site" evidence="66">
    <location>
        <position position="996"/>
    </location>
    <ligand>
        <name>Zn(2+)</name>
        <dbReference type="ChEBI" id="CHEBI:29105"/>
        <label>1</label>
        <note>structural</note>
    </ligand>
</feature>
<feature type="binding site" evidence="66">
    <location>
        <position position="998"/>
    </location>
    <ligand>
        <name>Zn(2+)</name>
        <dbReference type="ChEBI" id="CHEBI:29105"/>
        <label>1</label>
        <note>structural</note>
    </ligand>
</feature>
<feature type="binding site" evidence="8">
    <location>
        <begin position="1256"/>
        <end position="1263"/>
    </location>
    <ligand>
        <name>ATP</name>
        <dbReference type="ChEBI" id="CHEBI:30616"/>
    </ligand>
</feature>
<feature type="binding site" evidence="53">
    <location>
        <position position="1396"/>
    </location>
    <ligand>
        <name>Zn(2+)</name>
        <dbReference type="ChEBI" id="CHEBI:29105"/>
        <label>2</label>
    </ligand>
</feature>
<feature type="binding site" evidence="53">
    <location>
        <position position="1399"/>
    </location>
    <ligand>
        <name>Zn(2+)</name>
        <dbReference type="ChEBI" id="CHEBI:29105"/>
        <label>2</label>
    </ligand>
</feature>
<feature type="binding site" evidence="53">
    <location>
        <position position="1408"/>
    </location>
    <ligand>
        <name>Zn(2+)</name>
        <dbReference type="ChEBI" id="CHEBI:29105"/>
        <label>2</label>
    </ligand>
</feature>
<feature type="binding site" evidence="53">
    <location>
        <position position="1413"/>
    </location>
    <ligand>
        <name>Zn(2+)</name>
        <dbReference type="ChEBI" id="CHEBI:29105"/>
        <label>2</label>
    </ligand>
</feature>
<feature type="binding site" evidence="41">
    <location>
        <position position="1981"/>
    </location>
    <ligand>
        <name>Mg(2+)</name>
        <dbReference type="ChEBI" id="CHEBI:18420"/>
        <label>1</label>
        <note>catalytic; for RdRp activity</note>
    </ligand>
</feature>
<feature type="binding site" evidence="41">
    <location>
        <position position="1981"/>
    </location>
    <ligand>
        <name>Mg(2+)</name>
        <dbReference type="ChEBI" id="CHEBI:18420"/>
        <label>2</label>
        <note>catalytic; for RdRp activity</note>
    </ligand>
</feature>
<feature type="binding site" evidence="41 71">
    <location>
        <position position="2076"/>
    </location>
    <ligand>
        <name>Mg(2+)</name>
        <dbReference type="ChEBI" id="CHEBI:18420"/>
        <label>1</label>
        <note>catalytic; for RdRp activity</note>
    </ligand>
</feature>
<feature type="binding site" evidence="41 71">
    <location>
        <position position="2076"/>
    </location>
    <ligand>
        <name>Mg(2+)</name>
        <dbReference type="ChEBI" id="CHEBI:18420"/>
        <label>2</label>
        <note>catalytic; for RdRp activity</note>
    </ligand>
</feature>
<feature type="site" description="Cleavage; by autolysis" evidence="11">
    <location>
        <begin position="69"/>
        <end position="70"/>
    </location>
</feature>
<feature type="site" description="Cleavage; by protease 3C" evidence="1">
    <location>
        <begin position="341"/>
        <end position="342"/>
    </location>
</feature>
<feature type="site" description="Cleavage; by protease 3C" evidence="1">
    <location>
        <begin position="579"/>
        <end position="580"/>
    </location>
</feature>
<feature type="site" description="Cleavage; by autolysis" evidence="1">
    <location>
        <begin position="881"/>
        <end position="882"/>
    </location>
</feature>
<feature type="site" description="Cleavage; by protease 3C" evidence="1">
    <location>
        <begin position="1030"/>
        <end position="1031"/>
    </location>
</feature>
<feature type="site" description="Cleavage; by protease 3C" evidence="1">
    <location>
        <begin position="1127"/>
        <end position="1128"/>
    </location>
</feature>
<feature type="site" description="Involved in the interaction with host RTN3" evidence="5">
    <location>
        <position position="1152"/>
    </location>
</feature>
<feature type="site" description="Cleavage; by protease 3C" evidence="1">
    <location>
        <begin position="1456"/>
        <end position="1457"/>
    </location>
</feature>
<feature type="site" description="Cleavage; by protease 3C" evidence="1">
    <location>
        <begin position="1543"/>
        <end position="1544"/>
    </location>
</feature>
<feature type="site" description="Cleavage; by protease 3C" evidence="1">
    <location>
        <begin position="1565"/>
        <end position="1566"/>
    </location>
</feature>
<feature type="site" description="Cleavage; by protease 3C" evidence="1">
    <location>
        <begin position="1748"/>
        <end position="1749"/>
    </location>
</feature>
<feature type="modified residue" description="O-(5'-phospho-RNA)-tyrosine" evidence="39">
    <location>
        <position position="1546"/>
    </location>
</feature>
<feature type="modified residue" description="O-UMP-tyrosine; transient" evidence="14 22">
    <location>
        <position position="1546"/>
    </location>
</feature>
<feature type="lipid moiety-binding region" description="N-myristoyl glycine; by host" evidence="12 31 32">
    <location>
        <position position="2"/>
    </location>
</feature>
<feature type="mutagenesis site" description="100% loss of myristoylation. Impaired viral assembly." evidence="32">
    <original>G</original>
    <variation>A</variation>
    <location>
        <position position="2"/>
    </location>
</feature>
<feature type="mutagenesis site" description="50% loss of myristoylation. Severe reduction in specific infectivity." evidence="31">
    <original>A</original>
    <variation>D</variation>
    <location>
        <position position="3"/>
    </location>
</feature>
<feature type="mutagenesis site" description="No effect on myristoylation and virus growth." evidence="31">
    <original>A</original>
    <variation>G</variation>
    <variation>L</variation>
    <variation>V</variation>
    <location>
        <position position="3"/>
    </location>
</feature>
<feature type="mutagenesis site" description="No effect on myristoylation. Severe reduction in specific infectivity." evidence="31">
    <original>A</original>
    <variation>H</variation>
    <location>
        <position position="3"/>
    </location>
</feature>
<feature type="mutagenesis site" description="Complete loss of VP0 cleavage." evidence="11">
    <original>H</original>
    <variation>G</variation>
    <variation>T</variation>
    <location>
        <position position="264"/>
    </location>
</feature>
<feature type="mutagenesis site" description="Complete loss of catalytic activity." evidence="21">
    <original>H</original>
    <variation>A</variation>
    <location>
        <position position="901"/>
    </location>
</feature>
<feature type="mutagenesis site" description="Complete loss of catalytic activity." evidence="21">
    <original>D</original>
    <variation>A</variation>
    <location>
        <position position="919"/>
    </location>
</feature>
<feature type="mutagenesis site" description="Complete loss of autocatalytic activity of protease 2A. Complete loss of polyprotein cleavage." evidence="16">
    <original>C</original>
    <variation>S</variation>
    <location>
        <position position="936"/>
    </location>
</feature>
<feature type="mutagenesis site" description="Complete loss of autocatalytic activity of protease 2A. Complete loss of polyprotein cleavage." evidence="16">
    <original>C</original>
    <variation>S</variation>
    <variation>N</variation>
    <variation>T</variation>
    <location>
        <position position="938"/>
    </location>
</feature>
<feature type="mutagenesis site" description="Almost no effect on the autocatalytic activity of protease 2A. Almost no effect on polyprotein cleavage." evidence="16">
    <original>C</original>
    <variation>N</variation>
    <variation>S</variation>
    <location>
        <position position="945"/>
    </location>
</feature>
<feature type="mutagenesis site" description="Complete loss of catalytic activity." evidence="21">
    <original>C</original>
    <variation>A</variation>
    <location>
        <position position="990"/>
    </location>
</feature>
<feature type="mutagenesis site" description="90% loss of catalytic activity." evidence="21">
    <original>C</original>
    <variation>S</variation>
    <location>
        <position position="990"/>
    </location>
</feature>
<feature type="mutagenesis site" description="Complete loss of autocatalytic activity of protease 2A. Complete loss of polyprotein cleavage." evidence="16">
    <original>C</original>
    <variation>H</variation>
    <variation>P</variation>
    <variation>S</variation>
    <variation>Y</variation>
    <location>
        <position position="996"/>
    </location>
</feature>
<feature type="mutagenesis site" description="No effect on catalytic activity." evidence="21">
    <original>H</original>
    <variation>R</variation>
    <location>
        <position position="997"/>
    </location>
</feature>
<feature type="mutagenesis site" description="95% loss of catalytic activity." evidence="21">
    <original>H</original>
    <variation>A</variation>
    <location>
        <position position="998"/>
    </location>
</feature>
<feature type="mutagenesis site" description="Complete loss of autocatalytic activity of protease 2A. Complete loss of polyprotein cleavage." evidence="16">
    <original>H</original>
    <variation>Q</variation>
    <location>
        <position position="998"/>
    </location>
</feature>
<feature type="mutagenesis site" description="Complete loss of protein 2C ATPase activity." evidence="53">
    <original>K</original>
    <variation>A</variation>
    <location>
        <position position="1262"/>
    </location>
</feature>
<feature type="mutagenesis site" description="95% loss of protein 2C ATPase activity." evidence="53">
    <original>L</original>
    <variation>R</variation>
    <location>
        <position position="1268"/>
    </location>
</feature>
<feature type="mutagenesis site" description="80% loss of protein 2C ATPase activity." evidence="53">
    <original>A</original>
    <variation>R</variation>
    <location>
        <position position="1272"/>
    </location>
</feature>
<feature type="mutagenesis site" description="Complete loss of protein 2C ATPase activity." evidence="53">
    <original>D</original>
    <variation>A</variation>
    <location>
        <position position="1304"/>
    </location>
</feature>
<feature type="mutagenesis site" description="Complete loss of protein 2C ATPase activity." evidence="53">
    <original>N</original>
    <variation>A</variation>
    <location>
        <position position="1350"/>
    </location>
</feature>
<feature type="mutagenesis site" description="Complete loss of protein 2C ATPase activity." evidence="53">
    <original>R</original>
    <variation>A</variation>
    <location>
        <position position="1368"/>
    </location>
</feature>
<feature type="mutagenesis site" description="78% loss of 2C ATPase activity." evidence="53">
    <original>C</original>
    <variation>A</variation>
    <location>
        <position position="1396"/>
    </location>
</feature>
<feature type="mutagenesis site" description="30% loss of 2C ATPase activity." evidence="53">
    <original>C</original>
    <variation>A</variation>
    <location>
        <position position="1399"/>
    </location>
</feature>
<feature type="mutagenesis site" description="80% loss of protein 2C ATPase activity." evidence="53">
    <original>F</original>
    <variation>R</variation>
    <location>
        <position position="1405"/>
    </location>
</feature>
<feature type="mutagenesis site" description="87% loss of 2C ATPase activity." evidence="53">
    <original>C</original>
    <variation>A</variation>
    <location>
        <position position="1408"/>
    </location>
</feature>
<feature type="mutagenesis site" description="80% loss of protein 2C ATPase activity." evidence="53">
    <original>L</original>
    <variation>R</variation>
    <location>
        <position position="1411"/>
    </location>
</feature>
<feature type="mutagenesis site" description="90% loss of 2C ATPase activity." evidence="53">
    <original>C</original>
    <variation>A</variation>
    <location>
        <position position="1413"/>
    </location>
</feature>
<feature type="mutagenesis site" description="No effect on 2C ATPase activity and on oligomerization." evidence="53">
    <original>C</original>
    <variation>A</variation>
    <location>
        <position position="1450"/>
    </location>
</feature>
<feature type="mutagenesis site" description="90% loss of 2C ATPase activity." evidence="53">
    <original>M</original>
    <variation>A</variation>
    <location>
        <position position="1451"/>
    </location>
</feature>
<feature type="mutagenesis site" description="Complete loss of 2C ATPase activity." evidence="53">
    <original>L</original>
    <variation>A</variation>
    <location>
        <position position="1454"/>
    </location>
</feature>
<feature type="mutagenesis site" description="Almost complete loss of 2C ATPase activity." evidence="53">
    <original>F</original>
    <variation>A</variation>
    <location>
        <position position="1455"/>
    </location>
</feature>
<feature type="mutagenesis site" description="Complete loss of catalytic activity; when associated with S-1712." evidence="60">
    <original>E</original>
    <variation>Q</variation>
    <location>
        <position position="1636"/>
    </location>
</feature>
<feature type="mutagenesis site" description="Complete loss of catalytic activity; when associated with Q-1636." evidence="60">
    <original>C</original>
    <variation>S</variation>
    <location>
        <position position="1712"/>
    </location>
</feature>
<feature type="sequence conflict" description="In Ref. 2; CAA24446." evidence="65" ref="2">
    <original>RFCPVDYLLGNGTLLGNAFVFPH</original>
    <variation>SSARWITSLEMARCWGMPLCSA</variation>
    <location>
        <begin position="242"/>
        <end position="264"/>
    </location>
</feature>
<feature type="sequence conflict" description="In Ref. 2; CAA24446." evidence="65" ref="2">
    <original>I</original>
    <variation>L</variation>
    <location>
        <position position="287"/>
    </location>
</feature>
<feature type="sequence conflict" description="In Ref. 2; CAA24446." evidence="65" ref="2">
    <original>A</original>
    <variation>V</variation>
    <location>
        <position position="309"/>
    </location>
</feature>
<feature type="sequence conflict" description="In Ref. 2; CAA24446." evidence="65" ref="2">
    <original>DDP</original>
    <variation>AAS</variation>
    <location>
        <begin position="420"/>
        <end position="422"/>
    </location>
</feature>
<feature type="sequence conflict" description="In Ref. 2; CAA24446 and 3; AMS03992." evidence="65" ref="2 3">
    <original>F</original>
    <variation>S</variation>
    <location>
        <position position="464"/>
    </location>
</feature>
<feature type="sequence conflict" description="In Ref. 2; CAA24446." evidence="65" ref="2">
    <original>T</original>
    <variation>S</variation>
    <location>
        <position position="515"/>
    </location>
</feature>
<feature type="sequence conflict" description="In Ref. 3; AMS03992." evidence="65" ref="3">
    <original>P</original>
    <variation>S</variation>
    <location>
        <position position="674"/>
    </location>
</feature>
<feature type="sequence conflict" description="In Ref. 2; CAA24446." evidence="65" ref="2">
    <original>AV</original>
    <variation>QL</variation>
    <location>
        <begin position="855"/>
        <end position="856"/>
    </location>
</feature>
<feature type="sequence conflict" description="In Ref. 3; AMS03992." evidence="65" ref="3">
    <original>D</original>
    <variation>E</variation>
    <location>
        <position position="906"/>
    </location>
</feature>
<feature type="sequence conflict" description="In Ref. 2; CAA24446." evidence="65" ref="2">
    <original>A</original>
    <variation>V</variation>
    <location>
        <position position="972"/>
    </location>
</feature>
<feature type="sequence conflict" description="In Ref. 2; CAA24446." evidence="65" ref="2">
    <original>A</original>
    <variation>E</variation>
    <location>
        <position position="985"/>
    </location>
</feature>
<feature type="sequence conflict" description="In Ref. 3; AMS03992." evidence="65" ref="3">
    <original>S</original>
    <variation>G</variation>
    <location>
        <position position="1052"/>
    </location>
</feature>
<feature type="sequence conflict" description="In Ref. 2; CAA24446." evidence="65" ref="2">
    <original>NA</original>
    <variation>QR</variation>
    <location>
        <begin position="1140"/>
        <end position="1141"/>
    </location>
</feature>
<feature type="sequence conflict" description="In Ref. 2; CAA24446." evidence="65" ref="2">
    <original>V</original>
    <variation>A</variation>
    <location>
        <position position="1619"/>
    </location>
</feature>
<feature type="sequence conflict" description="In Ref. 2; CAA24446." evidence="65" ref="2">
    <original>AL</original>
    <variation>VF</variation>
    <location>
        <begin position="1626"/>
        <end position="1627"/>
    </location>
</feature>
<feature type="sequence conflict" description="In Ref. 2; CAA24446." evidence="65" ref="2">
    <original>L</original>
    <variation>F</variation>
    <location>
        <position position="1635"/>
    </location>
</feature>
<feature type="sequence conflict" description="In Ref. 2; CAA24446." evidence="65" ref="2">
    <original>G</original>
    <variation>R</variation>
    <location>
        <position position="1682"/>
    </location>
</feature>
<feature type="sequence conflict" description="In Ref. 2; CAA24446." evidence="65" ref="2">
    <original>VIGMHVGGN</original>
    <variation>SSGCMLVD</variation>
    <location>
        <begin position="1722"/>
        <end position="1730"/>
    </location>
</feature>
<feature type="sequence conflict" description="In Ref. 2; CAA24446." evidence="65" ref="2">
    <original>Y</original>
    <variation>L</variation>
    <location>
        <position position="1743"/>
    </location>
</feature>
<feature type="sequence conflict" description="In Ref. 2; CAA24446." evidence="65" ref="2">
    <original>Q</original>
    <variation>P</variation>
    <location>
        <position position="1752"/>
    </location>
</feature>
<feature type="sequence conflict" description="In Ref. 2; CAA24446." evidence="65" ref="2">
    <original>EV</original>
    <variation>DA</variation>
    <location>
        <begin position="1759"/>
        <end position="1760"/>
    </location>
</feature>
<feature type="sequence conflict" description="In Ref. 2; CAA24446." evidence="65" ref="2">
    <original>T</original>
    <variation>I</variation>
    <location>
        <position position="1840"/>
    </location>
</feature>
<feature type="strand" evidence="86">
    <location>
        <begin position="3"/>
        <end position="7"/>
    </location>
</feature>
<feature type="strand" evidence="86">
    <location>
        <begin position="17"/>
        <end position="23"/>
    </location>
</feature>
<feature type="strand" evidence="86">
    <location>
        <begin position="26"/>
        <end position="29"/>
    </location>
</feature>
<feature type="strand" evidence="84">
    <location>
        <begin position="33"/>
        <end position="35"/>
    </location>
</feature>
<feature type="helix" evidence="86">
    <location>
        <begin position="36"/>
        <end position="38"/>
    </location>
</feature>
<feature type="helix" evidence="86">
    <location>
        <begin position="51"/>
        <end position="54"/>
    </location>
</feature>
<feature type="strand" evidence="86">
    <location>
        <begin position="57"/>
        <end position="59"/>
    </location>
</feature>
<feature type="helix" evidence="87">
    <location>
        <begin position="66"/>
        <end position="69"/>
    </location>
</feature>
<feature type="helix" evidence="87">
    <location>
        <begin position="74"/>
        <end position="76"/>
    </location>
</feature>
<feature type="strand" evidence="86">
    <location>
        <begin position="83"/>
        <end position="87"/>
    </location>
</feature>
<feature type="strand" evidence="86">
    <location>
        <begin position="90"/>
        <end position="96"/>
    </location>
</feature>
<feature type="strand" evidence="87">
    <location>
        <begin position="100"/>
        <end position="102"/>
    </location>
</feature>
<feature type="helix" evidence="86">
    <location>
        <begin position="103"/>
        <end position="105"/>
    </location>
</feature>
<feature type="helix" evidence="86">
    <location>
        <begin position="113"/>
        <end position="115"/>
    </location>
</feature>
<feature type="strand" evidence="101">
    <location>
        <begin position="118"/>
        <end position="120"/>
    </location>
</feature>
<feature type="helix" evidence="86">
    <location>
        <begin position="126"/>
        <end position="128"/>
    </location>
</feature>
<feature type="strand" evidence="86">
    <location>
        <begin position="138"/>
        <end position="141"/>
    </location>
</feature>
<feature type="strand" evidence="86">
    <location>
        <begin position="147"/>
        <end position="151"/>
    </location>
</feature>
<feature type="helix" evidence="86">
    <location>
        <begin position="153"/>
        <end position="155"/>
    </location>
</feature>
<feature type="strand" evidence="102">
    <location>
        <begin position="156"/>
        <end position="158"/>
    </location>
</feature>
<feature type="helix" evidence="86">
    <location>
        <begin position="159"/>
        <end position="167"/>
    </location>
</feature>
<feature type="strand" evidence="86">
    <location>
        <begin position="168"/>
        <end position="180"/>
    </location>
</feature>
<feature type="strand" evidence="86">
    <location>
        <begin position="187"/>
        <end position="197"/>
    </location>
</feature>
<feature type="strand" evidence="86">
    <location>
        <begin position="206"/>
        <end position="210"/>
    </location>
</feature>
<feature type="helix" evidence="86">
    <location>
        <begin position="214"/>
        <end position="217"/>
    </location>
</feature>
<feature type="helix" evidence="86">
    <location>
        <begin position="220"/>
        <end position="222"/>
    </location>
</feature>
<feature type="strand" evidence="86">
    <location>
        <begin position="227"/>
        <end position="229"/>
    </location>
</feature>
<feature type="strand" evidence="86">
    <location>
        <begin position="236"/>
        <end position="238"/>
    </location>
</feature>
<feature type="helix" evidence="86">
    <location>
        <begin position="247"/>
        <end position="249"/>
    </location>
</feature>
<feature type="turn" evidence="86">
    <location>
        <begin position="250"/>
        <end position="253"/>
    </location>
</feature>
<feature type="helix" evidence="86">
    <location>
        <begin position="256"/>
        <end position="261"/>
    </location>
</feature>
<feature type="strand" evidence="86">
    <location>
        <begin position="262"/>
        <end position="268"/>
    </location>
</feature>
<feature type="turn" evidence="86">
    <location>
        <begin position="269"/>
        <end position="271"/>
    </location>
</feature>
<feature type="strand" evidence="86">
    <location>
        <begin position="273"/>
        <end position="279"/>
    </location>
</feature>
<feature type="strand" evidence="86">
    <location>
        <begin position="284"/>
        <end position="288"/>
    </location>
</feature>
<feature type="turn" evidence="86">
    <location>
        <begin position="290"/>
        <end position="292"/>
    </location>
</feature>
<feature type="strand" evidence="86">
    <location>
        <begin position="296"/>
        <end position="308"/>
    </location>
</feature>
<feature type="strand" evidence="85">
    <location>
        <begin position="311"/>
        <end position="313"/>
    </location>
</feature>
<feature type="strand" evidence="86">
    <location>
        <begin position="315"/>
        <end position="332"/>
    </location>
</feature>
<feature type="turn" evidence="86">
    <location>
        <begin position="349"/>
        <end position="352"/>
    </location>
</feature>
<feature type="strand" evidence="86">
    <location>
        <begin position="364"/>
        <end position="366"/>
    </location>
</feature>
<feature type="strand" evidence="86">
    <location>
        <begin position="380"/>
        <end position="383"/>
    </location>
</feature>
<feature type="helix" evidence="86">
    <location>
        <begin position="384"/>
        <end position="388"/>
    </location>
</feature>
<feature type="turn" evidence="86">
    <location>
        <begin position="400"/>
        <end position="404"/>
    </location>
</feature>
<feature type="helix" evidence="86">
    <location>
        <begin position="406"/>
        <end position="409"/>
    </location>
</feature>
<feature type="strand" evidence="86">
    <location>
        <begin position="411"/>
        <end position="414"/>
    </location>
</feature>
<feature type="strand" evidence="86">
    <location>
        <begin position="423"/>
        <end position="428"/>
    </location>
</feature>
<feature type="turn" evidence="86">
    <location>
        <begin position="430"/>
        <end position="432"/>
    </location>
</feature>
<feature type="turn" evidence="86">
    <location>
        <begin position="434"/>
        <end position="438"/>
    </location>
</feature>
<feature type="helix" evidence="86">
    <location>
        <begin position="440"/>
        <end position="445"/>
    </location>
</feature>
<feature type="strand" evidence="86">
    <location>
        <begin position="448"/>
        <end position="453"/>
    </location>
</feature>
<feature type="strand" evidence="86">
    <location>
        <begin position="455"/>
        <end position="461"/>
    </location>
</feature>
<feature type="strand" evidence="102">
    <location>
        <begin position="463"/>
        <end position="466"/>
    </location>
</feature>
<feature type="strand" evidence="86">
    <location>
        <begin position="470"/>
        <end position="476"/>
    </location>
</feature>
<feature type="strand" evidence="86">
    <location>
        <begin position="478"/>
        <end position="480"/>
    </location>
</feature>
<feature type="helix" evidence="86">
    <location>
        <begin position="486"/>
        <end position="489"/>
    </location>
</feature>
<feature type="strand" evidence="86">
    <location>
        <begin position="492"/>
        <end position="498"/>
    </location>
</feature>
<feature type="strand" evidence="86">
    <location>
        <begin position="500"/>
        <end position="502"/>
    </location>
</feature>
<feature type="strand" evidence="86">
    <location>
        <begin position="504"/>
        <end position="509"/>
    </location>
</feature>
<feature type="strand" evidence="86">
    <location>
        <begin position="514"/>
        <end position="521"/>
    </location>
</feature>
<feature type="helix" evidence="87">
    <location>
        <begin position="524"/>
        <end position="526"/>
    </location>
</feature>
<feature type="strand" evidence="86">
    <location>
        <begin position="530"/>
        <end position="537"/>
    </location>
</feature>
<feature type="strand" evidence="101">
    <location>
        <begin position="542"/>
        <end position="544"/>
    </location>
</feature>
<feature type="strand" evidence="86">
    <location>
        <begin position="547"/>
        <end position="557"/>
    </location>
</feature>
<feature type="strand" evidence="86">
    <location>
        <begin position="562"/>
        <end position="566"/>
    </location>
</feature>
<feature type="strand" evidence="87">
    <location>
        <begin position="570"/>
        <end position="572"/>
    </location>
</feature>
<feature type="strand" evidence="86">
    <location>
        <begin position="586"/>
        <end position="589"/>
    </location>
</feature>
<feature type="strand" evidence="93">
    <location>
        <begin position="594"/>
        <end position="596"/>
    </location>
</feature>
<feature type="helix" evidence="86">
    <location>
        <begin position="626"/>
        <end position="628"/>
    </location>
</feature>
<feature type="helix" evidence="86">
    <location>
        <begin position="636"/>
        <end position="638"/>
    </location>
</feature>
<feature type="helix" evidence="86">
    <location>
        <begin position="652"/>
        <end position="654"/>
    </location>
</feature>
<feature type="helix" evidence="86">
    <location>
        <begin position="656"/>
        <end position="660"/>
    </location>
</feature>
<feature type="strand" evidence="86">
    <location>
        <begin position="664"/>
        <end position="673"/>
    </location>
</feature>
<feature type="strand" evidence="101">
    <location>
        <begin position="676"/>
        <end position="678"/>
    </location>
</feature>
<feature type="helix" evidence="101">
    <location>
        <begin position="681"/>
        <end position="683"/>
    </location>
</feature>
<feature type="strand" evidence="86">
    <location>
        <begin position="685"/>
        <end position="688"/>
    </location>
</feature>
<feature type="strand" evidence="86">
    <location>
        <begin position="693"/>
        <end position="695"/>
    </location>
</feature>
<feature type="helix" evidence="86">
    <location>
        <begin position="696"/>
        <end position="701"/>
    </location>
</feature>
<feature type="strand" evidence="86">
    <location>
        <begin position="704"/>
        <end position="721"/>
    </location>
</feature>
<feature type="strand" evidence="85">
    <location>
        <begin position="723"/>
        <end position="725"/>
    </location>
</feature>
<feature type="strand" evidence="86">
    <location>
        <begin position="733"/>
        <end position="739"/>
    </location>
</feature>
<feature type="helix" evidence="86">
    <location>
        <begin position="752"/>
        <end position="755"/>
    </location>
</feature>
<feature type="strand" evidence="86">
    <location>
        <begin position="757"/>
        <end position="759"/>
    </location>
</feature>
<feature type="strand" evidence="86">
    <location>
        <begin position="761"/>
        <end position="765"/>
    </location>
</feature>
<feature type="strand" evidence="86">
    <location>
        <begin position="771"/>
        <end position="775"/>
    </location>
</feature>
<feature type="strand" evidence="86">
    <location>
        <begin position="780"/>
        <end position="786"/>
    </location>
</feature>
<feature type="strand" evidence="87">
    <location>
        <begin position="790"/>
        <end position="793"/>
    </location>
</feature>
<feature type="strand" evidence="87">
    <location>
        <begin position="796"/>
        <end position="799"/>
    </location>
</feature>
<feature type="turn" evidence="86">
    <location>
        <begin position="801"/>
        <end position="804"/>
    </location>
</feature>
<feature type="helix" evidence="86">
    <location>
        <begin position="812"/>
        <end position="814"/>
    </location>
</feature>
<feature type="strand" evidence="86">
    <location>
        <begin position="818"/>
        <end position="823"/>
    </location>
</feature>
<feature type="strand" evidence="102">
    <location>
        <begin position="827"/>
        <end position="830"/>
    </location>
</feature>
<feature type="strand" evidence="86">
    <location>
        <begin position="832"/>
        <end position="850"/>
    </location>
</feature>
<feature type="turn" evidence="103">
    <location>
        <begin position="856"/>
        <end position="859"/>
    </location>
</feature>
<feature type="strand" evidence="86">
    <location>
        <begin position="860"/>
        <end position="863"/>
    </location>
</feature>
<feature type="strand" evidence="99">
    <location>
        <begin position="1250"/>
        <end position="1255"/>
    </location>
</feature>
<feature type="helix" evidence="99">
    <location>
        <begin position="1262"/>
        <end position="1276"/>
    </location>
</feature>
<feature type="strand" evidence="99">
    <location>
        <begin position="1281"/>
        <end position="1284"/>
    </location>
</feature>
<feature type="strand" evidence="99">
    <location>
        <begin position="1298"/>
        <end position="1305"/>
    </location>
</feature>
<feature type="helix" evidence="99">
    <location>
        <begin position="1312"/>
        <end position="1320"/>
    </location>
</feature>
<feature type="strand" evidence="99">
    <location>
        <begin position="1321"/>
        <end position="1324"/>
    </location>
</feature>
<feature type="helix" evidence="99">
    <location>
        <begin position="1333"/>
        <end position="1335"/>
    </location>
</feature>
<feature type="strand" evidence="99">
    <location>
        <begin position="1343"/>
        <end position="1351"/>
    </location>
</feature>
<feature type="helix" evidence="99">
    <location>
        <begin position="1366"/>
        <end position="1368"/>
    </location>
</feature>
<feature type="strand" evidence="99">
    <location>
        <begin position="1370"/>
        <end position="1377"/>
    </location>
</feature>
<feature type="helix" evidence="99">
    <location>
        <begin position="1379"/>
        <end position="1381"/>
    </location>
</feature>
<feature type="helix" evidence="99">
    <location>
        <begin position="1389"/>
        <end position="1392"/>
    </location>
</feature>
<feature type="strand" evidence="99">
    <location>
        <begin position="1403"/>
        <end position="1407"/>
    </location>
</feature>
<feature type="turn" evidence="99">
    <location>
        <begin position="1410"/>
        <end position="1412"/>
    </location>
</feature>
<feature type="strand" evidence="99">
    <location>
        <begin position="1413"/>
        <end position="1421"/>
    </location>
</feature>
<feature type="turn" evidence="99">
    <location>
        <begin position="1422"/>
        <end position="1424"/>
    </location>
</feature>
<feature type="helix" evidence="99">
    <location>
        <begin position="1430"/>
        <end position="1454"/>
    </location>
</feature>
<feature type="helix" evidence="100">
    <location>
        <begin position="1474"/>
        <end position="1484"/>
    </location>
</feature>
<feature type="helix" evidence="100">
    <location>
        <begin position="1487"/>
        <end position="1495"/>
    </location>
</feature>
<feature type="strand" evidence="100">
    <location>
        <begin position="1498"/>
        <end position="1501"/>
    </location>
</feature>
<feature type="helix" evidence="100">
    <location>
        <begin position="1503"/>
        <end position="1505"/>
    </location>
</feature>
<feature type="strand" evidence="100">
    <location>
        <begin position="1507"/>
        <end position="1511"/>
    </location>
</feature>
<feature type="strand" evidence="91">
    <location>
        <begin position="1546"/>
        <end position="1550"/>
    </location>
</feature>
<feature type="strand" evidence="91">
    <location>
        <begin position="1556"/>
        <end position="1558"/>
    </location>
</feature>
<feature type="helix" evidence="91">
    <location>
        <begin position="1560"/>
        <end position="1564"/>
    </location>
</feature>
<feature type="helix" evidence="94">
    <location>
        <begin position="1567"/>
        <end position="1579"/>
    </location>
</feature>
<feature type="strand" evidence="94">
    <location>
        <begin position="1580"/>
        <end position="1585"/>
    </location>
</feature>
<feature type="strand" evidence="94">
    <location>
        <begin position="1588"/>
        <end position="1597"/>
    </location>
</feature>
<feature type="strand" evidence="94">
    <location>
        <begin position="1599"/>
        <end position="1603"/>
    </location>
</feature>
<feature type="helix" evidence="94">
    <location>
        <begin position="1604"/>
        <end position="1606"/>
    </location>
</feature>
<feature type="strand" evidence="94">
    <location>
        <begin position="1610"/>
        <end position="1614"/>
    </location>
</feature>
<feature type="strand" evidence="94">
    <location>
        <begin position="1617"/>
        <end position="1628"/>
    </location>
</feature>
<feature type="strand" evidence="94">
    <location>
        <begin position="1634"/>
        <end position="1645"/>
    </location>
</feature>
<feature type="helix" evidence="94">
    <location>
        <begin position="1652"/>
        <end position="1654"/>
    </location>
</feature>
<feature type="strand" evidence="94">
    <location>
        <begin position="1662"/>
        <end position="1669"/>
    </location>
</feature>
<feature type="strand" evidence="94">
    <location>
        <begin position="1671"/>
        <end position="1674"/>
    </location>
</feature>
<feature type="strand" evidence="94">
    <location>
        <begin position="1677"/>
        <end position="1692"/>
    </location>
</feature>
<feature type="strand" evidence="94">
    <location>
        <begin position="1695"/>
        <end position="1705"/>
    </location>
</feature>
<feature type="strand" evidence="94">
    <location>
        <begin position="1715"/>
        <end position="1718"/>
    </location>
</feature>
<feature type="strand" evidence="94">
    <location>
        <begin position="1721"/>
        <end position="1729"/>
    </location>
</feature>
<feature type="strand" evidence="94">
    <location>
        <begin position="1734"/>
        <end position="1738"/>
    </location>
</feature>
<feature type="helix" evidence="94">
    <location>
        <begin position="1741"/>
        <end position="1744"/>
    </location>
</feature>
<feature type="strand" evidence="88">
    <location>
        <begin position="1750"/>
        <end position="1756"/>
    </location>
</feature>
<feature type="turn" evidence="88">
    <location>
        <begin position="1757"/>
        <end position="1761"/>
    </location>
</feature>
<feature type="turn" evidence="89">
    <location>
        <begin position="1763"/>
        <end position="1766"/>
    </location>
</feature>
<feature type="helix" evidence="89">
    <location>
        <begin position="1770"/>
        <end position="1772"/>
    </location>
</feature>
<feature type="turn" evidence="88">
    <location>
        <begin position="1777"/>
        <end position="1781"/>
    </location>
</feature>
<feature type="strand" evidence="95">
    <location>
        <begin position="1786"/>
        <end position="1788"/>
    </location>
</feature>
<feature type="strand" evidence="95">
    <location>
        <begin position="1792"/>
        <end position="1794"/>
    </location>
</feature>
<feature type="helix" evidence="88">
    <location>
        <begin position="1802"/>
        <end position="1807"/>
    </location>
</feature>
<feature type="helix" evidence="88">
    <location>
        <begin position="1820"/>
        <end position="1834"/>
    </location>
</feature>
<feature type="turn" evidence="92">
    <location>
        <begin position="1835"/>
        <end position="1837"/>
    </location>
</feature>
<feature type="helix" evidence="88">
    <location>
        <begin position="1845"/>
        <end position="1850"/>
    </location>
</feature>
<feature type="strand" evidence="97">
    <location>
        <begin position="1860"/>
        <end position="1862"/>
    </location>
</feature>
<feature type="turn" evidence="88">
    <location>
        <begin position="1866"/>
        <end position="1872"/>
    </location>
</feature>
<feature type="helix" evidence="88">
    <location>
        <begin position="1875"/>
        <end position="1878"/>
    </location>
</feature>
<feature type="turn" evidence="88">
    <location>
        <begin position="1881"/>
        <end position="1884"/>
    </location>
</feature>
<feature type="helix" evidence="88">
    <location>
        <begin position="1887"/>
        <end position="1895"/>
    </location>
</feature>
<feature type="strand" evidence="88">
    <location>
        <begin position="1902"/>
        <end position="1906"/>
    </location>
</feature>
<feature type="strand" evidence="95">
    <location>
        <begin position="1910"/>
        <end position="1912"/>
    </location>
</feature>
<feature type="helix" evidence="88">
    <location>
        <begin position="1913"/>
        <end position="1917"/>
    </location>
</feature>
<feature type="strand" evidence="88">
    <location>
        <begin position="1923"/>
        <end position="1926"/>
    </location>
</feature>
<feature type="helix" evidence="88">
    <location>
        <begin position="1929"/>
        <end position="1948"/>
    </location>
</feature>
<feature type="turn" evidence="88">
    <location>
        <begin position="1952"/>
        <end position="1955"/>
    </location>
</feature>
<feature type="helix" evidence="88">
    <location>
        <begin position="1962"/>
        <end position="1965"/>
    </location>
</feature>
<feature type="turn" evidence="88">
    <location>
        <begin position="1966"/>
        <end position="1968"/>
    </location>
</feature>
<feature type="helix" evidence="88">
    <location>
        <begin position="1969"/>
        <end position="1972"/>
    </location>
</feature>
<feature type="strand" evidence="88">
    <location>
        <begin position="1975"/>
        <end position="1978"/>
    </location>
</feature>
<feature type="strand" evidence="88">
    <location>
        <begin position="1981"/>
        <end position="1984"/>
    </location>
</feature>
<feature type="helix" evidence="88">
    <location>
        <begin position="1985"/>
        <end position="1988"/>
    </location>
</feature>
<feature type="helix" evidence="88">
    <location>
        <begin position="1991"/>
        <end position="2003"/>
    </location>
</feature>
<feature type="turn" evidence="88">
    <location>
        <begin position="2004"/>
        <end position="2006"/>
    </location>
</feature>
<feature type="helix" evidence="88">
    <location>
        <begin position="2007"/>
        <end position="2010"/>
    </location>
</feature>
<feature type="helix" evidence="88">
    <location>
        <begin position="2011"/>
        <end position="2017"/>
    </location>
</feature>
<feature type="strand" evidence="88">
    <location>
        <begin position="2018"/>
        <end position="2023"/>
    </location>
</feature>
<feature type="strand" evidence="88">
    <location>
        <begin position="2026"/>
        <end position="2032"/>
    </location>
</feature>
<feature type="strand" evidence="98">
    <location>
        <begin position="2036"/>
        <end position="2038"/>
    </location>
</feature>
<feature type="helix" evidence="88">
    <location>
        <begin position="2041"/>
        <end position="2060"/>
    </location>
</feature>
<feature type="strand" evidence="96">
    <location>
        <begin position="2061"/>
        <end position="2063"/>
    </location>
</feature>
<feature type="helix" evidence="88">
    <location>
        <begin position="2066"/>
        <end position="2068"/>
    </location>
</feature>
<feature type="strand" evidence="88">
    <location>
        <begin position="2070"/>
        <end position="2074"/>
    </location>
</feature>
<feature type="strand" evidence="88">
    <location>
        <begin position="2077"/>
        <end position="2084"/>
    </location>
</feature>
<feature type="helix" evidence="88">
    <location>
        <begin position="2088"/>
        <end position="2097"/>
    </location>
</feature>
<feature type="strand" evidence="88">
    <location>
        <begin position="2102"/>
        <end position="2104"/>
    </location>
</feature>
<feature type="turn" evidence="88">
    <location>
        <begin position="2105"/>
        <end position="2107"/>
    </location>
</feature>
<feature type="turn" evidence="88">
    <location>
        <begin position="2116"/>
        <end position="2118"/>
    </location>
</feature>
<feature type="strand" evidence="88">
    <location>
        <begin position="2124"/>
        <end position="2128"/>
    </location>
</feature>
<feature type="strand" evidence="90">
    <location>
        <begin position="2130"/>
        <end position="2132"/>
    </location>
</feature>
<feature type="strand" evidence="88">
    <location>
        <begin position="2135"/>
        <end position="2139"/>
    </location>
</feature>
<feature type="helix" evidence="88">
    <location>
        <begin position="2142"/>
        <end position="2149"/>
    </location>
</feature>
<feature type="strand" evidence="88">
    <location>
        <begin position="2151"/>
        <end position="2153"/>
    </location>
</feature>
<feature type="helix" evidence="88">
    <location>
        <begin position="2155"/>
        <end position="2157"/>
    </location>
</feature>
<feature type="helix" evidence="88">
    <location>
        <begin position="2158"/>
        <end position="2169"/>
    </location>
</feature>
<feature type="helix" evidence="88">
    <location>
        <begin position="2170"/>
        <end position="2172"/>
    </location>
</feature>
<feature type="helix" evidence="88">
    <location>
        <begin position="2174"/>
        <end position="2184"/>
    </location>
</feature>
<feature type="helix" evidence="88">
    <location>
        <begin position="2188"/>
        <end position="2191"/>
    </location>
</feature>
<feature type="helix" evidence="88">
    <location>
        <begin position="2198"/>
        <end position="2208"/>
    </location>
</feature>
<name>POLG_POL1M</name>
<accession>P03300</accession>
<accession>A0A142KD04</accession>
<accession>P03299</accession>
<accession>Q84879</accession>
<accession>Q84880</accession>
<accession>Q89679</accession>
<sequence length="2209" mass="246540">MGAQVSSQKVGAHENSNRAYGGSTINYTTINYYRDSASNAASKQDFSQDPSKFTEPIKDVLIKTAPMLNSPNIEACGYSDRVLQLTLGNSTITTQEAANSVVAYGRWPEYLRDSEANPVDQPTEPDVAACRFYTLDTVSWTKESRGWWWKLPDALRDMGLFGQNMYYHYLGRSGYTVHVQCNASKFHQGALGVFAVPEMCLAGDSNTTTMHTSYQNANPGEKGGTFTGTFTPDNNQTSPARRFCPVDYLLGNGTLLGNAFVFPHQIINLRTNNCATLVLPYVNSLSIDSMVKHNNWGIAILPLAPLNFASESSPEIPITLTIAPMCCEFNGLRNITLPRLQGLPVMNTPGSNQYLTADNFQSPCALPEFDVTPPIDIPGEVKNMMELAEIDTMIPFDLSATKKNTMEMYRVRLSDKPHTDDPILCLSLSPASDPRLSHTMLGEILNYYTHWAGSLKFTFLFCGFMMATGKLLVSYAPPGADPPKKRKEAMLGTHVIWDIGLQSSCTMVVPWISNTTYRQTIDDSFTEGGYISVFYQTRIVVPLSTPREMDILGFVSACNDFSVRLLRDTTHIEQKALAQGLGQMLESMIDNTVRETVGAATSRDALPNTEASGPTHSKEIPALTAVETGATNPLVPSDTVQTRHVVQHRSRSESSIESFFARGACVTIMTVDNPASTTNKDKLFAVWKITYKDTVQLRRKLEFFTYSRFDMELTFVVTANFTETNNGHALNQVYQIMYVPPGAPVPEKWDDYTWQTSSNPSIFYTYGTAPARISVPYVGISNAYSHFYDGFSKVPLKDQSAALGDSLYGAASLNDFGILAVRVVNDHNPTKVTSKIRVYLKPKHIRVWCPRPPRAVAYYGPGVDYKDGTLTPLSTKDLTTYGFGHQNKAVYTAGYKICNYHLATQDDLQNAVNVMWSRDLLVTESRAQGTDSIARCNCNAGVYYCESRRKYYPVSFVGPTFQYMEANNYYPARYQSHMLIGHGFASPGDCGGILRCHHGVIGIITAGGEGLVAFSDIRDLYAYEEEAMEQGITNYIESLGAAFGSGFTQQISDKITELTNMVTSTITEKLLKNLIKIISSLVIITRNYEDTTTVLATLALLGCDASPWQWLRKKACDVLEIPYVIKQGDSWLKKFTEACNAAKGLEWVSNKISKFIDWLKEKIIPQARDKLEFVTKLRQLEMLENQISTIHQSCPSQEHQEILFNNVRWLSIQSKRFAPLYAVEAKRIQKLEHTINNYIQFKSKHRIEPVCLLVHGSPGTGKSVATNLIARAIAERENTSTYSLPPDPSHFDGYKQQGVVIMDDLNQNPDGADMKLFCQMVSTVEFIPPMASLEEKGILFTSNYVLASTNSSRISPPTVAHSDALARRFAFDMDIQVMNEYSRDGKLNMAMATEMCKNCHQPANFKRCCPLVCGKAIQLMDKSSRVRYSIDQITTMIINERNRRSNIGNCMEALFQGPLQYKDLKIDIKTSPPPECINDLLQAVDSQEVRDYCEKKGWIVNITSQVQTERNINRAMTILQAVTTFAAVAGVVYVMYKLFAGHQGAYTGLPNKKPNVPTIRTAKVQGPGFDYAVAMAKRNIVTATTSKGEFTMLGVHDNVAILPTHASPGESIVIDGKEVEILDAKALEDQAGTNLEITIITLKRNEKFRDIRPHIPTQITETNDGVLIVNTSKYPNMYVPVGAVTEQGYLNLGGRQTARTLMYNFPTRAGQCGGVITCTGKVIGMHVGGNGSHGFAAALKRSYFTQSQGEIQWMRPSKEVGYPIINAPSKTKLEPSAFHYVFEGVKEPAVLTKNDPRLKTDFEEAIFSKYVGNKITEVDEYMKEAVDHYAGQLMSLDINTEQMCLEDAMYGTDGLEALDLSTSAGYPYVAMGKKKRDILNKQTRDTKEMQKLLDTYGINLPLVTYVKDELRSKTKVEQGKSRLIEASSLNDSVAMRMAFGNLYAAFHKNPGVITGSAVGCDPDLFWSKIPVLMEEKLFAFDYTGYDASLSPAWFEALKMVLEKIGFGDRVDYIDYLNHSHHLYKNKTYCVKGGMPSGCSGTSIFNSMINNLIIRTLLLKTYKGIDLDHLKMIAYGDDVIASYPHEVDASLLAQSGKDYGLTMTPADKSATFETVTWENVTFLKRFFRADEKYPFLIHPVMPMKEIHESIRWTKDPRNTQDHVRSLCLLAWHNGEEEYNKFLAKIRSVPIGRALLLPEYSTLYRRWLDSF</sequence>
<comment type="function">
    <molecule>Capsid protein VP1</molecule>
    <text evidence="27 28 30 47 50 52">Forms an icosahedral capsid of pseudo T=3 symmetry with capsid proteins VP2 and VP3 (PubMed:2994218). The capsid is 300 Angstroms in diameter, composed of 60 copies of each capsid protein and enclosing the viral positive strand RNA genome (PubMed:2994218). Capsid protein VP1 mainly forms the vertices of the capsid (PubMed:23365424). Capsid protein VP1 interacts with host cell receptor PVR to provide virion attachment to target host epithelial cells (PubMed:25631086). This attachment induces virion internalization predominantly through clathrin- and caveolin-independent endocytosis in Hela cells and through caveolin-mediated endocytosis in brain microvascular endothelial cells (PubMed:17622193, PubMed:17717529, PubMed:18191571). Tyrosine kinases are probably involved in the entry process (PubMed:17717529). Virus binding to PVR induces increased junctional permeability and rearrangement of junctional proteins (PubMed:17717529). Modulation of endothelial tight junctions, as well as cytolytic infection of endothelial cells themselves, may result in loss of endothelial integrity which may help the virus to reach the CNS (PubMed:17717529). After binding to its receptor, the capsid undergoes conformational changes (PubMed:25631086). Capsid protein VP1 N-terminus (that contains an amphipathic alpha-helix) and capsid protein VP4 are externalized (PubMed:25631086). Together, they shape a pore in the host membrane through which viral genome is translocated to host cell cytoplasm (PubMed:25631086).</text>
</comment>
<comment type="function">
    <molecule>Capsid protein VP2</molecule>
    <text evidence="30 52">Forms an icosahedral capsid of pseudo T=3 symmetry with capsid proteins VP1 and VP3 (PubMed:2994218). The capsid is 300 Angstroms in diameter, composed of 60 copies of each capsid protein and enclosing the viral positive strand RNA genome (PubMed:18191571).</text>
</comment>
<comment type="function">
    <molecule>Capsid protein VP3</molecule>
    <text evidence="30 52">Forms an icosahedral capsid of pseudo T=3 symmetry with capsid proteins VP2 and VP1 (PubMed:2994218). The capsid is 300 Angstroms in diameter, composed of 60 copies of each capsid protein and enclosing the viral positive strand RNA genome (PubMed:18191571).</text>
</comment>
<comment type="function">
    <molecule>Capsid protein VP4</molecule>
    <text evidence="47 50">Lies on the inner surface of the capsid shell (PubMed:25631086). After binding to the host receptor, the capsid undergoes conformational changes (PubMed:25631086). Capsid protein VP4 is released, Capsid protein VP1 N-terminus is externalized, and together, they shape a pore in the host membrane through which the viral genome is translocated into the host cell cytoplasm (PubMed:23365424, PubMed:25631086).</text>
</comment>
<comment type="function">
    <molecule>Capsid protein VP0</molecule>
    <text evidence="32 58">Component of immature procapsids, which is cleaved into capsid proteins VP4 and VP2 after maturation (PubMed:7849583). Allows the capsid to remain inactive before the maturation step (PubMed:1851815).</text>
</comment>
<comment type="function">
    <molecule>Protease 2A</molecule>
    <text evidence="1 21 36 48 64">Cysteine protease that cleaves viral polyprotein and specific host proteins (PubMed:1649327). It is responsible for the autocatalytic cleavage between the P1 and P2 regions, which is the first cleavage occurring in the polyprotein (PubMed:1649327). Also cleaves the host translation initiation factor EIF4G1, in order to shut down the capped cellular mRNA translation (PubMed:9755863). Inhibits the host nucleus-cytoplasm protein and RNA trafficking by cleaving host members of the nuclear pores including NUP98, NUP62 and NUP153 (PubMed:19789179). Counteracts stress granule formation probably by antagonizing its assembly or promoting its dissassembly (By similarity). Cleaves and inhibits host IFIH1/MDA5, thereby inhibiting the type-I IFN production and the establishment of the antiviral state (PubMed:24390337). Cleaves and inhibits host MAVS, thereby inhibiting the type-I IFN production and the establishment of the antiviral state (PubMed:24390337).</text>
</comment>
<comment type="function">
    <molecule>Protein 2B</molecule>
    <text evidence="43 62">Plays an essential role in the virus replication cycle by acting as a viroporin (PubMed:21835803). Creates a pore in the host endoplasmic reticulum and as a consequence releases Ca2+ in the cytoplasm of infected cell. In turn, high levels of cytoplasmic calcium may trigger membrane trafficking and transport of viral ER-associated proteins to viroplasms, sites of viral genome replication (PubMed:9151862).</text>
</comment>
<comment type="function">
    <molecule>Protein 2C</molecule>
    <text evidence="35 45 53 57 61">Induces and associates with structural rearrangements of intracellular membranes. Displays RNA-binding, nucleotide binding and NTPase activities (PubMed:19520852, PubMed:30231078, PubMed:7730315, PubMed:8385138). May play a role in virion morphogenesis and viral RNA encapsidation by interacting with the capsid protein VP3 (PubMed:22761387).</text>
</comment>
<comment type="function">
    <molecule>Protein 3AB</molecule>
    <text evidence="40">Localizes the viral replication complex to the surface of membranous vesicles. Together with protein 3CD binds the Cis-Active RNA Element (CRE) which is involved in RNA synthesis initiation. Acts as a cofactor to stimulate the activity of 3D polymerase, maybe through a nucleid acid chaperone activity.</text>
</comment>
<comment type="function">
    <molecule>Protein 3A</molecule>
    <text evidence="20 24 54 73">Localizes the viral replication complex to the surface of membranous vesicles. It inhibits host cell endoplasmic reticulum-to-Golgi apparatus transport and causes the disassembly of the Golgi complex, possibly through GBF1 interaction (PubMed:15914217, PubMed:17079330). This would result in depletion of MHC, trail receptors and IFN receptors at the host cell surface (PubMed:15914217, PubMed:17079330). Plays an essential role in viral RNA replication by recruiting ACBD3 and PI4KB at the viral replication sites, thereby allowing the formation of the rearranged membranous structures where viral replication takes place (Probable) (PubMed:31381608).</text>
</comment>
<comment type="function">
    <molecule>Viral protein genome-linked</molecule>
    <text evidence="14 22 37 39 46 55 56">Acts as a primer for viral RNA replication and remains covalently bound to viral genomic RNA (PubMed:12502805, PubMed:16840321, PubMed:20441784, PubMed:209034, PubMed:6250717). VPg is uridylylated prior to priming replication into VPg-pUpU (PubMed:12502805, PubMed:16840321, PubMed:20441784). The oriI viral genomic sequence may act as a template for this. The VPg-pUpU is then used as primer on the genomic RNA poly(A) by the RNA-dependent RNA polymerase to replicate the viral genome (PubMed:12502805, PubMed:16840321). During genome replication, the VPg-RNA linkage is removed by the host TDP2, thereby accelerating replication (PubMed:22908287, PubMed:32023921). During the late stage of the replication cycle, host TDP2 is excluded from sites of viral RNA synthesis and encapsidation, allowing for the generation of progeny virions (PubMed:22908287).</text>
</comment>
<comment type="function">
    <molecule>Protein 3CD</molecule>
    <text evidence="13 17">Involved in the viral replication complex and viral polypeptide maturation (PubMed:10666252, PubMed:1331532). It exhibits protease activity with a specificity and catalytic efficiency that is different from protease 3C (PubMed:1331532). Protein 3CD binds to the 5'UTR of the viral genome (PubMed:10666252).</text>
</comment>
<comment type="function">
    <molecule>Protease 3C</molecule>
    <text evidence="2 29 33 34 48 51 60">Major viral protease that mediates proteolytic processing of the polyprotein (PubMed:8097606). Cleaves host EIF5B, contributing to host translation shutoff (PubMed:18572216). Cleaves also host PABPC1, contributing to host translation shutoff (PubMed:18632855). Cleaves host RIGI and thus contributes to the inhibition of type I interferon production (PubMed:24390337). Cleaves host NLRP1, triggers host N-glycine-mediated degradation of the autoinhibitory NLRP1 N-terminal fragment (By similarity). Inhibits the integrated stress response (ISR) in the infected cell by cleaving host G3BP1 (PubMed:18005751, PubMed:26610553). Stress granule formation is thus inhibited, which allows protein synthesis and viral replication (PubMed:18005751, PubMed:26610553).</text>
</comment>
<comment type="function">
    <molecule>RNA-directed RNA polymerase</molecule>
    <text evidence="49">Replicates the viral genomic RNA on the surface of intracellular membranes. May form linear arrays of subunits that propagate along a strong head-to-tail interaction called interface-I. Covalently attaches UMP to a tyrosine of VPg, which is used to prime RNA synthesis. The positive stranded RNA genome is first replicated at virus induced membranous vesicles, creating a dsRNA genomic replication form. This dsRNA is then used as template to synthesize positive stranded RNA genomes. ss(+)RNA genomes are either translated, replicated or encapsidated.</text>
</comment>
<comment type="catalytic activity">
    <molecule>RNA-directed RNA polymerase</molecule>
    <reaction evidence="7">
        <text>RNA(n) + a ribonucleoside 5'-triphosphate = RNA(n+1) + diphosphate</text>
        <dbReference type="Rhea" id="RHEA:21248"/>
        <dbReference type="Rhea" id="RHEA-COMP:14527"/>
        <dbReference type="Rhea" id="RHEA-COMP:17342"/>
        <dbReference type="ChEBI" id="CHEBI:33019"/>
        <dbReference type="ChEBI" id="CHEBI:61557"/>
        <dbReference type="ChEBI" id="CHEBI:140395"/>
        <dbReference type="EC" id="2.7.7.48"/>
    </reaction>
</comment>
<comment type="catalytic activity">
    <molecule>Protease 2A</molecule>
    <reaction evidence="21">
        <text>Selective cleavage of Tyr-|-Gly bond in the picornavirus polyprotein.</text>
        <dbReference type="EC" id="3.4.22.29"/>
    </reaction>
</comment>
<comment type="catalytic activity">
    <molecule>Protein 2C</molecule>
    <reaction evidence="35 53 57 61">
        <text>a ribonucleoside 5'-triphosphate + H2O = a ribonucleoside 5'-diphosphate + phosphate + H(+)</text>
        <dbReference type="Rhea" id="RHEA:23680"/>
        <dbReference type="ChEBI" id="CHEBI:15377"/>
        <dbReference type="ChEBI" id="CHEBI:15378"/>
        <dbReference type="ChEBI" id="CHEBI:43474"/>
        <dbReference type="ChEBI" id="CHEBI:57930"/>
        <dbReference type="ChEBI" id="CHEBI:61557"/>
        <dbReference type="EC" id="3.6.1.15"/>
    </reaction>
</comment>
<comment type="catalytic activity">
    <molecule>Protease 3C</molecule>
    <reaction evidence="9 60">
        <text>Selective cleavage of Gln-|-Gly bond in the poliovirus polyprotein. In other picornavirus reactions Glu may be substituted for Gln, and Ser or Thr for Gly.</text>
        <dbReference type="EC" id="3.4.22.28"/>
    </reaction>
</comment>
<comment type="cofactor">
    <molecule>RNA-directed RNA polymerase</molecule>
    <cofactor evidence="41">
        <name>Mg(2+)</name>
        <dbReference type="ChEBI" id="CHEBI:18420"/>
    </cofactor>
    <text evidence="3 41">Binds 2 magnesium ions that constitute a dinuclear catalytic metal center (PubMed:21148772). The magnesium ions are not prebound but only present for catalysis (PubMed:21148772). Requires the presence of 3CDpro or 3CPro (By similarity).</text>
</comment>
<comment type="activity regulation">
    <molecule>RNA-directed RNA polymerase</molecule>
    <text evidence="19">Replication or transcription is subject to high level of random mutations by the nucleotide analog ribavirin.</text>
</comment>
<comment type="biophysicochemical properties">
    <kinetics>
        <KM evidence="53">642 uM for ATP</KM>
        <text evidence="53">For protein 2C ATPase activity.</text>
    </kinetics>
</comment>
<comment type="subunit">
    <molecule>Capsid protein VP0</molecule>
    <text evidence="52">Interacts with capsid protein VP1 and capsid protein VP3 to form heterotrimeric protomers.</text>
</comment>
<comment type="subunit">
    <molecule>Capsid protein VP1</molecule>
    <text evidence="12 52">Interacts with capsid protein VP0, and capsid protein VP3 to form heterotrimeric protomers (PubMed:2994218). Five protomers subsequently associate to form pentamers which serve as building blocks for the capsid (PubMed:2994218). Interacts with capsid protein VP2, capsid protein VP3 and capsid protein VP4 following cleavage of capsid protein VP0 (PubMed:10618374, PubMed:2994218). Interacts with human PVR (PubMed:10618374).</text>
</comment>
<comment type="subunit">
    <molecule>Capsid protein VP2</molecule>
    <text evidence="52">Interacts with capsid protein VP1 and capsid protein VP3 in the mature capsid.</text>
</comment>
<comment type="subunit">
    <molecule>Capsid protein VP3</molecule>
    <text evidence="38 52">Interacts with capsid protein VP0 and capsid protein VP1 to form heterotrimeric protomers (PubMed:2994218). Five protomers subsequently associate to form pentamers which serve as building blocks for the capsid (PubMed:2994218). Interacts with capsid protein VP4 in the mature capsid (PubMed:2994218). Interacts with protein 2C; this interaction may be important for virion morphogenesis (PubMed:20865167).</text>
</comment>
<comment type="subunit">
    <molecule>Capsid protein VP4</molecule>
    <text evidence="52">Interacts with capsid protein VP1 and capsid protein VP3.</text>
</comment>
<comment type="subunit">
    <molecule>Protease 2A</molecule>
    <text evidence="4">Homodimer.</text>
</comment>
<comment type="subunit">
    <molecule>Protein 2C</molecule>
    <text evidence="25 38 68 72">Homohexamer; forms a hexameric ring structure with 6-fold symmetry characteristic of AAA+ ATPases (Probable). Interacts (via N-terminus) with host RTN3 (via reticulon domain); this interaction is important for viral replication (PubMed:17182608). Interacts with capsid protein VP3; this interaction may be important for virion morphogenesis (PubMed:20865167).</text>
</comment>
<comment type="subunit">
    <molecule>Protein 3AB</molecule>
    <text evidence="59">Interacts with protein 3CD.</text>
</comment>
<comment type="subunit">
    <molecule>Protein 3A</molecule>
    <text evidence="15 23 42 44 54">Homodimer (PubMed:12823963, PubMed:31381608). Interacts with host GBF1 (PubMed:17005635, PubMed:21345960). Interacts (via GOLD domain) with host ACBD3 (via GOLD domain); this interaction allows the formation of a viral protein 3A/ACBD3 heterotetramer with a 2:2 stoichiometry, which will stimulate the recruitment of host PI4KB in order to synthesize PI4P at the viral RNA replication sites (PubMed:22258260, PubMed:31381608).</text>
</comment>
<comment type="subunit">
    <molecule>Viral protein genome-linked</molecule>
    <text evidence="26">Interacts with RNA-directed RNA polymerase.</text>
</comment>
<comment type="subunit">
    <molecule>Protein 3CD</molecule>
    <text evidence="59">Interacts with protein 3AB and with RNA-directed RNA polymerase.</text>
</comment>
<comment type="subunit">
    <molecule>RNA-directed RNA polymerase</molecule>
    <text evidence="26">Interacts with Viral protein genome-linked and with protein 3CD.</text>
</comment>
<comment type="interaction">
    <interactant intactId="EBI-21242141">
        <id>PRO_0000424692</id>
    </interactant>
    <interactant intactId="EBI-1791792">
        <id>Q9H3P7</id>
        <label>ACBD3</label>
    </interactant>
    <organismsDiffer>true</organismsDiffer>
    <experiments>12</experiments>
</comment>
<comment type="interaction">
    <interactant intactId="EBI-21242141">
        <id>PRO_0000424692</id>
    </interactant>
    <interactant intactId="EBI-359050">
        <id>Q92538</id>
        <label>GBF1</label>
    </interactant>
    <organismsDiffer>true</organismsDiffer>
    <experiments>8</experiments>
</comment>
<comment type="interaction">
    <interactant intactId="EBI-21242141">
        <id>PRO_0000424692</id>
    </interactant>
    <interactant intactId="EBI-1053214">
        <id>Q9UBF8</id>
        <label>PI4KB</label>
    </interactant>
    <organismsDiffer>true</organismsDiffer>
    <experiments>9</experiments>
</comment>
<comment type="subcellular location">
    <molecule>Capsid protein VP0</molecule>
    <subcellularLocation>
        <location>Virion</location>
    </subcellularLocation>
    <subcellularLocation>
        <location evidence="65">Host cytoplasm</location>
    </subcellularLocation>
</comment>
<comment type="subcellular location">
    <molecule>Capsid protein VP4</molecule>
    <subcellularLocation>
        <location>Virion</location>
    </subcellularLocation>
</comment>
<comment type="subcellular location">
    <molecule>Capsid protein VP2</molecule>
    <subcellularLocation>
        <location evidence="32">Virion</location>
    </subcellularLocation>
    <subcellularLocation>
        <location evidence="65">Host cytoplasm</location>
    </subcellularLocation>
</comment>
<comment type="subcellular location">
    <molecule>Capsid protein VP3</molecule>
    <subcellularLocation>
        <location evidence="32">Virion</location>
    </subcellularLocation>
    <subcellularLocation>
        <location evidence="65">Host cytoplasm</location>
    </subcellularLocation>
</comment>
<comment type="subcellular location">
    <molecule>Capsid protein VP1</molecule>
    <subcellularLocation>
        <location evidence="32">Virion</location>
    </subcellularLocation>
    <subcellularLocation>
        <location evidence="65">Host cytoplasm</location>
    </subcellularLocation>
</comment>
<comment type="subcellular location">
    <molecule>Protein 2B</molecule>
    <subcellularLocation>
        <location evidence="65">Host cytoplasmic vesicle membrane</location>
        <topology evidence="65">Peripheral membrane protein</topology>
        <orientation evidence="65">Cytoplasmic side</orientation>
    </subcellularLocation>
    <text>Probably localizes to the surface of intracellular membrane vesicles that are induced after virus infection as the site for viral RNA replication. These vesicles are derived from the endoplasmic reticulum.</text>
</comment>
<comment type="subcellular location">
    <molecule>Protein 2C</molecule>
    <subcellularLocation>
        <location evidence="65">Host cytoplasmic vesicle membrane</location>
        <topology evidence="65">Peripheral membrane protein</topology>
        <orientation evidence="65">Cytoplasmic side</orientation>
    </subcellularLocation>
    <text>Probably localizes to the surface of intracellular membrane vesicles that are induced after virus infection as the site for viral RNA replication. These vesicles are derived from the endoplasmic reticulum.</text>
</comment>
<comment type="subcellular location">
    <molecule>Protein 3A</molecule>
    <subcellularLocation>
        <location evidence="65">Host cytoplasmic vesicle membrane</location>
        <topology evidence="65">Peripheral membrane protein</topology>
        <orientation evidence="65">Cytoplasmic side</orientation>
    </subcellularLocation>
    <text>Probably localizes to the surface of intracellular membrane vesicles that are induced after virus infection as the site for viral RNA replication. These vesicles are derived from the endoplasmic reticulum.</text>
</comment>
<comment type="subcellular location">
    <molecule>Protein 3AB</molecule>
    <subcellularLocation>
        <location evidence="65">Host cytoplasmic vesicle membrane</location>
        <topology evidence="65">Peripheral membrane protein</topology>
        <orientation evidence="65">Cytoplasmic side</orientation>
    </subcellularLocation>
    <text>Probably localizes to the surface of intracellular membrane vesicles that are induced after virus infection as the site for viral RNA replication. These vesicles are derived from the endoplasmic reticulum.</text>
</comment>
<comment type="subcellular location">
    <molecule>Viral protein genome-linked</molecule>
    <subcellularLocation>
        <location evidence="69">Virion</location>
    </subcellularLocation>
    <subcellularLocation>
        <location evidence="5">Host cytoplasm</location>
    </subcellularLocation>
</comment>
<comment type="subcellular location">
    <molecule>Protease 3C</molecule>
    <subcellularLocation>
        <location>Host cytoplasm</location>
    </subcellularLocation>
</comment>
<comment type="subcellular location">
    <molecule>Protein 3CD</molecule>
    <subcellularLocation>
        <location evidence="18">Host nucleus</location>
    </subcellularLocation>
    <subcellularLocation>
        <location evidence="18">Host cytoplasm</location>
    </subcellularLocation>
    <subcellularLocation>
        <location evidence="65">Host cytoplasmic vesicle membrane</location>
        <topology evidence="65">Peripheral membrane protein</topology>
        <orientation evidence="65">Cytoplasmic side</orientation>
    </subcellularLocation>
    <text>Probably localizes to the surface of intracellular membrane vesicles that are induced after virus infection as the site for viral RNA replication. These vesicles are derived from the endoplasmic reticulum.</text>
</comment>
<comment type="subcellular location">
    <molecule>RNA-directed RNA polymerase</molecule>
    <subcellularLocation>
        <location evidence="65">Host cytoplasmic vesicle membrane</location>
        <topology evidence="65">Peripheral membrane protein</topology>
        <orientation evidence="65">Cytoplasmic side</orientation>
    </subcellularLocation>
    <text>Probably localizes to the surface of intracellular membrane vesicles that are induced after virus infection as the site for viral RNA replication. These vesicles are derived from the endoplasmic reticulum.</text>
</comment>
<comment type="domain">
    <molecule>Protein 2C</molecule>
    <text evidence="35 53 57 63">The N-terminus has membrane-binding (PubMed:9696129). The N-terminus also displays RNA-binding properties (PubMed:7730315). The N-terminus is involved in oligomerization (PubMed:19520852). The central part contains an ATPase domain and a C4-type zinc-finger (PubMed:30231078). The C-terminus is involved in RNA-binding (PubMed:7730315). The extreme C-terminus contains a region involved in oligomerization (PubMed:30231078).</text>
</comment>
<comment type="PTM">
    <molecule>Genome polyprotein</molecule>
    <text evidence="60">Specific enzymatic cleavages in vivo by the viral proteases yield processing intermediates and the mature proteins.</text>
</comment>
<comment type="PTM">
    <molecule>Capsid protein VP0</molecule>
    <text evidence="31 32">Myristoylation is required for the formation of pentamers during virus assembly (PubMed:1850017, PubMed:1851815). Further assembly of 12 pentamers and a molecule of genomic RNA generates the provirion.</text>
</comment>
<comment type="PTM">
    <molecule>Capsid protein VP0</molecule>
    <text evidence="11">During virion maturation, immature virions are rendered infectious following cleavage of VP0 into VP4 and VP2. This maturation seems to be an autocatalytic event triggered by the presence of RNA in the capsid and it is followed by a conformational change infectious virion.</text>
</comment>
<comment type="PTM">
    <molecule>Capsid protein VP4</molecule>
    <text evidence="31">Myristoylation is required during RNA encapsidation and formation of the mature virus particle.</text>
</comment>
<comment type="PTM">
    <molecule>Viral protein genome-linked</molecule>
    <text evidence="14 22">VPg is uridylylated by the polymerase into VPg-pUpU. This acts as a nucleotide-peptide primer for the genomic RNA replication.</text>
</comment>
<comment type="similarity">
    <text evidence="65">Belongs to the picornaviruses polyprotein family.</text>
</comment>
<comment type="caution">
    <molecule>Protein 3A</molecule>
    <text evidence="67 70">Has been proposed to interact with host LIS1/NUF (PubMed:16138011), but this has not been confirmed by other studies (PubMed:21345960).</text>
</comment>
<comment type="online information" name="Virus Particle ExploreR db">
    <link uri="https://viperdb.org/Info_Page.php?VDB=1dgi"/>
    <text>Icosahedral capsid structure associated with cellular receptor</text>
</comment>
<comment type="online information" name="Virus Particle ExploreR db">
    <link uri="https://viperdb.org/Info_Page.php?VDB=1nn8"/>
    <text>Icosahedral capsid structure associated with cellular receptor</text>
</comment>
<comment type="online information" name="Virus Particle ExploreR db">
    <link uri="https://viperdb.org/Info_Page.php?VDB=1po1"/>
    <text>Icosahedral capsid structure in complex with R80633, an inhibitor of viral replication</text>
</comment>
<comment type="online information" name="Virus Particle ExploreR db">
    <link uri="https://viperdb.org/Info_Page.php?VDB=1po2"/>
    <text>Icosahedral capsid structure in complex with R77975, an inhibitor of viral replication</text>
</comment>
<comment type="online information" name="Virus Particle ExploreR db">
    <link uri="https://viperdb.org/Info_Page.php?VDB=1pov"/>
    <text>Icosahedral empty capsid structure</text>
</comment>
<comment type="online information" name="Virus Particle ExploreR db">
    <link uri="https://viperdb.org/Info_Page.php?VDB=1vbd"/>
    <text>Icosahedral capsid structure complexed with R78206</text>
</comment>
<comment type="online information" name="Virus Particle ExploreR db">
    <link uri="https://viperdb.org/Info_Page.php?VDB=2plv"/>
    <text>Icosahedral capsid structure</text>
</comment>
<comment type="online information" name="Virus Particle ExploreR db">
    <link uri="https://viperdb.org/Info_Page.php?VDB=1xyr"/>
    <text>Icosahedral capsid structure of 135S cell entry intermediate</text>
</comment>
<comment type="online information" name="Virus Particle ExploreR db">
    <link uri="https://viperdb.org/Info_Page.php?VDB=1hxs"/>
    <text>Icosahedral capsid structure</text>
</comment>
<reference key="1">
    <citation type="journal article" date="1981" name="Nature">
        <title>Primary structure, gene organization and polypeptide expression of poliovirus RNA.</title>
        <authorList>
            <person name="Kitamura N."/>
            <person name="Semler B.L."/>
            <person name="Rothberg P.G."/>
            <person name="Larsen G.R."/>
            <person name="Adler C.J."/>
            <person name="Dorner A.J."/>
            <person name="Emini E.A."/>
            <person name="Hanecak R."/>
            <person name="Lee J.J."/>
            <person name="van der Werf S."/>
            <person name="Anderson C.W."/>
            <person name="Wimmer E."/>
        </authorList>
    </citation>
    <scope>NUCLEOTIDE SEQUENCE [GENOMIC RNA]</scope>
</reference>
<reference key="2">
    <citation type="journal article" date="1981" name="Proc. Natl. Acad. Sci. U.S.A.">
        <title>Molecular cloning of poliovirus cDNA and determination of the complete nucleotide sequence of the viral genome.</title>
        <authorList>
            <person name="Racaniello V.R."/>
            <person name="Baltimore D."/>
        </authorList>
    </citation>
    <scope>NUCLEOTIDE SEQUENCE [GENOMIC RNA]</scope>
</reference>
<reference key="3">
    <citation type="submission" date="2016-03" db="EMBL/GenBank/DDBJ databases">
        <authorList>
            <person name="Ploux O."/>
        </authorList>
    </citation>
    <scope>NUCLEOTIDE SEQUENCE [LARGE SCALE GENOMIC DNA]</scope>
</reference>
<reference key="4">
    <citation type="journal article" date="1982" name="J. Virol.">
        <title>Identification of the initiation site of poliovirus polyprotein synthesis.</title>
        <authorList>
            <person name="Dorner A.J."/>
            <person name="Dorner L.F."/>
            <person name="Larsen G.R."/>
            <person name="Wimmer E."/>
            <person name="Anderson C.W."/>
        </authorList>
    </citation>
    <scope>PROTEIN SEQUENCE OF 2-69</scope>
</reference>
<reference key="5">
    <citation type="journal article" date="1980" name="Cell">
        <title>The genome-linked protein of picornaviruses. VII. Genetic mapping of poliovirus VPg by protein and RNA sequence studies.</title>
        <authorList>
            <person name="Kitamura N."/>
            <person name="Adler C.J."/>
            <person name="Rothberg P.G."/>
            <person name="Martinko J."/>
            <person name="Nathenson S.G."/>
            <person name="Wimmer E."/>
        </authorList>
    </citation>
    <scope>NUCLEOTIDE SEQUENCE [GENOMIC RNA] OF 1539-1574</scope>
    <scope>FUNCTION (VIRAL PROTEIN GENOME-LINKED)</scope>
</reference>
<reference key="6">
    <citation type="journal article" date="1977" name="Proc. Natl. Acad. Sci. U.S.A.">
        <title>The 5'-terminal structures of poliovirion RNA and poliovirus mRNA differ only in the genome-linked protein VPg.</title>
        <authorList>
            <person name="Nomoto A."/>
            <person name="Kitamura N."/>
            <person name="Golini F."/>
            <person name="Wimmer E."/>
        </authorList>
    </citation>
    <scope>SUBCELLULAR LOCATION (VIRAL PROTEIN GENOME-LINKED)</scope>
</reference>
<reference key="7">
    <citation type="journal article" date="1978" name="J. Biol. Chem.">
        <title>Protein is linked to the 5' end of poliovirus RNA by a phosphodiester linkage to tyrosine.</title>
        <authorList>
            <person name="Ambros V."/>
            <person name="Baltimore D."/>
        </authorList>
    </citation>
    <scope>FUNCTION (VIRAL PROTEIN GENOME-LINKED)</scope>
    <scope>COVALENT RNA LINKAGE AT TYR-1546 (VIRAL PROTEIN GENOME-LINKED)</scope>
</reference>
<reference key="8">
    <citation type="journal article" date="1989" name="J. Virol.">
        <title>Purification and properties of poliovirus RNA polymerase expressed in Escherichia coli.</title>
        <authorList>
            <person name="Plotch S.J."/>
            <person name="Palant O."/>
            <person name="Gluzman Y."/>
        </authorList>
    </citation>
    <scope>FUNCTION (RNA-DIRECTED RNA POLYMERASE)</scope>
</reference>
<reference key="9">
    <citation type="journal article" date="1990" name="Protein Eng.">
        <title>An attempt to unify the structure of polymerases.</title>
        <authorList>
            <person name="Delarue M."/>
            <person name="Poch O."/>
            <person name="Tordo N."/>
            <person name="Moras D."/>
            <person name="Argos P."/>
        </authorList>
    </citation>
    <scope>ACTIVE SITE (RNA-DIRECTED RNA POLYMERASE)</scope>
</reference>
<reference key="10">
    <citation type="journal article" date="1991" name="J. Virol.">
        <title>Myristoylation is important at multiple stages in poliovirus assembly.</title>
        <authorList>
            <person name="Moscufo N."/>
            <person name="Simons J."/>
            <person name="Chow M."/>
        </authorList>
    </citation>
    <scope>MYRISTOYLATION AT GLY-2</scope>
    <scope>MUTAGENESIS OF ALA-3</scope>
</reference>
<reference key="11">
    <citation type="journal article" date="1991" name="J. Virol.">
        <title>Characterization of poliovirus 2A proteinase by mutational analysis: residues required for autocatalytic activity are essential for induction of cleavage of eukaryotic initiation factor 4F polypeptide p220.</title>
        <authorList>
            <person name="Hellen C.U."/>
            <person name="Faecke M."/>
            <person name="Kraeusslich H.G."/>
            <person name="Lee C.K."/>
            <person name="Wimmer E."/>
        </authorList>
    </citation>
    <scope>CATALYTIC ACTIVITY (PROTEASE 2A)</scope>
    <scope>FUNCTION (PROTEASE 2A)</scope>
    <scope>MUTAGENESIS OF HIS-901; ASP-919; CYS-990; HIS-997 AND HIS-998</scope>
    <scope>ACTIVE SITE (PROTEASE 2A)</scope>
</reference>
<reference key="12">
    <citation type="journal article" date="1991" name="J. Gen. Virol.">
        <title>A Gly1 to Ala substitution in poliovirus capsid protein VP0 blocks its myristoylation and prevents viral assembly.</title>
        <authorList>
            <person name="Marc D."/>
            <person name="Girard M."/>
            <person name="van der Werf S."/>
        </authorList>
    </citation>
    <scope>FUNCTION (CAPSID PROTEIN VP0)</scope>
    <scope>MYRISTOYLATION AT GLY-2</scope>
    <scope>MUTAGENESIS OF GLY-2</scope>
    <scope>SUBCELLULAR LOCATION (CAPSID PROTEIN VP1)</scope>
    <scope>SUBCELLULAR LOCATION (CAPSID PROTEIN VP2)</scope>
    <scope>SUBCELLULAR LOCATION (CAPSID PROTEIN VP3)</scope>
</reference>
<reference key="13">
    <citation type="journal article" date="1992" name="J. Virol.">
        <title>Purification and characterization of poliovirus polypeptide 3CD, a proteinase and a precursor for RNA polymerase.</title>
        <authorList>
            <person name="Harris K.S."/>
            <person name="Reddigari S.R."/>
            <person name="Nicklin M.J."/>
            <person name="Haemmerle T."/>
            <person name="Wimmer E."/>
        </authorList>
    </citation>
    <scope>FUNCTION (PROTEIN 3CD)</scope>
</reference>
<reference key="14">
    <citation type="journal article" date="1992" name="Virology">
        <title>Characterization of the roles of conserved cysteine and histidine residues in poliovirus 2A protease.</title>
        <authorList>
            <person name="Yu S.F."/>
            <person name="Lloyd R.E."/>
        </authorList>
    </citation>
    <scope>MUTAGENESIS OF CYS-936; CYS-938; CYS-945; CYS-996 AND HIS-998</scope>
</reference>
<reference key="15">
    <citation type="journal article" date="1993" name="J. Biol. Chem.">
        <title>Poliovirus protein 2C has ATPase and GTPase activities.</title>
        <authorList>
            <person name="Rodriguez P.L."/>
            <person name="Carrasco L."/>
        </authorList>
    </citation>
    <scope>FUNCTION (PROTEIN 2C)</scope>
    <scope>SUBUNIT (PROTEIN 2C)</scope>
    <scope>CATALYTIC ACTIVITY (PROTEIN 2C)</scope>
</reference>
<reference key="16">
    <citation type="journal article" date="1993" name="Virology">
        <title>Substitution mutations at the putative catalytic triad of the poliovirus 3C protease have differential effects on cleavage at different sites.</title>
        <authorList>
            <person name="Kean K.M."/>
            <person name="Howell M.T."/>
            <person name="Gruenert S."/>
            <person name="Girard M."/>
            <person name="Jackson R.J."/>
        </authorList>
    </citation>
    <scope>FUNCTION (PROTEASE 3C)</scope>
    <scope>PROTEOLYTIC CLEAVAGE (GENOME POLYPROTEIN)</scope>
    <scope>CATALYTIC ACTIVITY (PROTEASE 3C)</scope>
    <scope>ACTIVE SITE (PROTEASE 3C)</scope>
    <scope>MUTAGENESIS OF GLU-1636 AND CYS-1712</scope>
</reference>
<reference key="17">
    <citation type="journal article" date="1994" name="J. Biol. Chem.">
        <title>Interaction of poliovirus polypeptide 3CDpro with the 5' and 3' termini of the poliovirus genome. Identification of viral and cellular cofactors needed for efficient binding.</title>
        <authorList>
            <person name="Harris K.S."/>
            <person name="Xiang W."/>
            <person name="Alexander L."/>
            <person name="Lane W.S."/>
            <person name="Paul A.V."/>
            <person name="Wimmer E."/>
        </authorList>
    </citation>
    <scope>INTERACTION WITH PROTEIN 3CD (PROTEIN 3AB)</scope>
    <scope>INTERACTION WITH PROTEIN 3AB (PROTEIN 3CD)</scope>
</reference>
<reference key="18">
    <citation type="journal article" date="1995" name="J. Biol. Chem.">
        <title>Poliovirus protein 2C contains two regions involved in RNA binding activity.</title>
        <authorList>
            <person name="Rodriguez P.L."/>
            <person name="Carrasco L."/>
        </authorList>
    </citation>
    <scope>RNA-BINDING (PROTEIN 2C)</scope>
    <scope>DOMAIN (PROTEIN 2C)</scope>
    <scope>CATALYTIC ACTIVITY (PROTEIN 2C)</scope>
    <scope>FUNCTION (PROTEIN 2C)</scope>
</reference>
<reference key="19">
    <citation type="journal article" date="1997" name="J. Virol.">
        <title>Poliovirus infection and expression of the poliovirus protein 2B provoke the disassembly of the Golgi complex, the organelle target for the antipoliovirus drug Ro-090179.</title>
        <authorList>
            <person name="Sandoval I.V."/>
            <person name="Carrasco L."/>
        </authorList>
    </citation>
    <scope>FUNCTION (PROTEIN 2B)</scope>
</reference>
<reference key="20">
    <citation type="journal article" date="1998" name="FEBS Lett.">
        <title>Poliovirus 2A proteinase cleaves directly the eIF-4G subunit of eIF-4F complex.</title>
        <authorList>
            <person name="Ventoso I."/>
            <person name="MacMillan S.E."/>
            <person name="Hershey J.W."/>
            <person name="Carrasco L."/>
        </authorList>
    </citation>
    <scope>FUNCTION (PROTEASE 2A)</scope>
</reference>
<reference key="21">
    <citation type="journal article" date="1998" name="Virus Res.">
        <title>Amino-terminal region of poliovirus 2C protein is sufficient for membrane binding.</title>
        <authorList>
            <person name="Echeverri A."/>
            <person name="Banerjee R."/>
            <person name="Dasgupta A."/>
        </authorList>
    </citation>
    <scope>DOMAIN (PROTEIN 2C)</scope>
</reference>
<reference key="22">
    <citation type="journal article" date="1999" name="J. Virol.">
        <title>Poliovirus mutants at histidine 195 of VP2 do not cleave VP0 into VP2 and VP4.</title>
        <authorList>
            <person name="Hindiyeh M."/>
            <person name="Li Q.H."/>
            <person name="Basavappa R."/>
            <person name="Hogle J.M."/>
            <person name="Chow M."/>
        </authorList>
    </citation>
    <scope>MUTAGENESIS OF HIS-264</scope>
    <scope>PROTEOLYTIC CLEAVAGE (CAPSID PROTEIN VP0)</scope>
</reference>
<reference key="23">
    <citation type="journal article" date="2000" name="J. Virol.">
        <title>Interactions of viral protein 3CD and poly(rC) binding protein with the 5' untranslated region of the poliovirus genome.</title>
        <authorList>
            <person name="Gamarnik A.V."/>
            <person name="Andino R."/>
        </authorList>
    </citation>
    <scope>FUNCTION (PROTEIN 3CD)</scope>
</reference>
<reference key="24">
    <citation type="journal article" date="2003" name="J. Virol.">
        <title>Biochemical and genetic studies of the VPg uridylylation reaction catalyzed by the RNA polymerase of poliovirus.</title>
        <authorList>
            <person name="Paul A.V."/>
            <person name="Peters J."/>
            <person name="Mugavero J."/>
            <person name="Yin J."/>
            <person name="van Boom J.H."/>
            <person name="Wimmer E."/>
        </authorList>
    </citation>
    <scope>FUNCTION (VIRAL PROTEIN GENOME-LINKED)</scope>
    <scope>COVALENT RNA-LINKAGE AT TYR-1546 (VIRAL PROTEIN GENOME-LINKED)</scope>
    <scope>URIDYLYLATION AT TYR-1546</scope>
</reference>
<reference key="25">
    <citation type="journal article" date="2003" name="J. Mol. Biol.">
        <title>Towards an understanding of the poliovirus replication complex: the solution structure of the soluble domain of the poliovirus 3A protein.</title>
        <authorList>
            <person name="Strauss D.M."/>
            <person name="Glustrom L.W."/>
            <person name="Wuttke D.S."/>
        </authorList>
    </citation>
    <scope>SUBUNIT (PROTEIN 3A)</scope>
</reference>
<reference key="26">
    <citation type="journal article" date="2004" name="Virology">
        <title>Nuclear entry of poliovirus protease-polymerase precursor 3CD: implications for host cell transcription shut-off.</title>
        <authorList>
            <person name="Sharma R."/>
            <person name="Raychaudhuri S."/>
            <person name="Dasgupta A."/>
        </authorList>
    </citation>
    <scope>SUBCELLULAR LOCATION (PROTEIN 3CD)</scope>
</reference>
<reference key="27">
    <citation type="journal article" date="2005" name="Cell Cycle">
        <title>Poliovirus protein 3A binds and inactivates LIS1, causing block of membrane protein trafficking and deregulation of cell division.</title>
        <authorList>
            <person name="Kondratova A.A."/>
            <person name="Neznanov N."/>
            <person name="Kondratov R.V."/>
            <person name="Gudkov A.V."/>
        </authorList>
    </citation>
    <scope>SUBUNIT (PROTEIN 3A)</scope>
    <scope>CAUTION</scope>
</reference>
<reference key="28">
    <citation type="journal article" date="2005" name="Virology">
        <title>Inhibition of cellular protein secretion by picornaviral 3A proteins.</title>
        <authorList>
            <person name="Choe S.S."/>
            <person name="Dodd D.A."/>
            <person name="Kirkegaard K."/>
        </authorList>
    </citation>
    <scope>FUNCTION (PROTEIN 3A)</scope>
</reference>
<reference key="29">
    <citation type="journal article" date="2005" name="Virus Res.">
        <title>Ribavirin and lethal mutagenesis of poliovirus: molecular mechanisms, resistance and biological implications.</title>
        <authorList>
            <person name="Vignuzzi M."/>
            <person name="Stone J.K."/>
            <person name="Andino R."/>
        </authorList>
    </citation>
    <scope>ACTIVITY REGULATION (RNA-DIRECTED RNA POLYMERASE)</scope>
</reference>
<reference key="30">
    <citation type="journal article" date="2006" name="J. Virol.">
        <title>Intramolecular and intermolecular uridylylation by poliovirus RNA-dependent RNA polymerase.</title>
        <authorList>
            <person name="Richards O.C."/>
            <person name="Spagnolo J.F."/>
            <person name="Lyle J.M."/>
            <person name="Vleck S.E."/>
            <person name="Kuchta R.D."/>
            <person name="Kirkegaard K."/>
        </authorList>
    </citation>
    <scope>FUNCTION (VIRAL PROTEIN GENOME-LINKED)</scope>
    <scope>COVALENT RNA-LINKAGE AT TYR-1546 (VIRAL PROTEIN GENOME-LINKED)</scope>
    <scope>URIDYLYLATION AT TYR-1546</scope>
</reference>
<reference key="31">
    <citation type="journal article" date="2006" name="J. Virol.">
        <title>Effects of picornavirus 3A Proteins on Protein Transport and GBF1-dependent COP-I recruitment.</title>
        <authorList>
            <person name="Wessels E."/>
            <person name="Duijsings D."/>
            <person name="Lanke K.H."/>
            <person name="van Dooren S.H."/>
            <person name="Jackson C.L."/>
            <person name="Melchers W.J."/>
            <person name="van Kuppeveld F.J."/>
        </authorList>
    </citation>
    <scope>INTERACTION WITH HOST GBF1 (PROTEIN 3A)</scope>
</reference>
<reference key="32">
    <citation type="journal article" date="2007" name="J. Biol. Chem.">
        <title>Reticulon 3 binds the 2C protein of enterovirus 71 and is required for viral replication.</title>
        <authorList>
            <person name="Tang W.-F."/>
            <person name="Yang S.-Y."/>
            <person name="Wu B.-W."/>
            <person name="Jheng J.-R."/>
            <person name="Chen Y.-L."/>
            <person name="Shih C.-H."/>
            <person name="Lin K.-H."/>
            <person name="Lai H.-C."/>
            <person name="Tang P."/>
            <person name="Horng J.-T."/>
        </authorList>
    </citation>
    <scope>INTERACTION WITH HOST RTN3 (PROTEIN 2C)</scope>
</reference>
<reference key="33">
    <citation type="journal article" date="2007" name="J. Virol.">
        <title>Hijacking components of the cellular secretory pathway for replication of poliovirus RNA.</title>
        <authorList>
            <person name="Belov G.A."/>
            <person name="Altan-Bonnet N."/>
            <person name="Kovtunovych G."/>
            <person name="Jackson C.L."/>
            <person name="Lippincott-Schwartz J."/>
            <person name="Ehrenfeld E."/>
        </authorList>
    </citation>
    <scope>FUNCTION (PROTEIN 3A)</scope>
</reference>
<reference key="34">
    <citation type="journal article" date="2007" name="Cell Host Microbe">
        <title>Inhibition of cytoplasmic mRNA stress granule formation by a viral proteinase.</title>
        <authorList>
            <person name="White J.P."/>
            <person name="Cardenas A.M."/>
            <person name="Marissen W.E."/>
            <person name="Lloyd R.E."/>
        </authorList>
    </citation>
    <scope>FUNCTION (PROTEASE 3C)</scope>
</reference>
<reference key="35">
    <citation type="journal article" date="2007" name="PLoS Biol.">
        <title>Imaging poliovirus entry in live cells.</title>
        <authorList>
            <person name="Brandenburg B."/>
            <person name="Lee L.Y."/>
            <person name="Lakadamyali M."/>
            <person name="Rust M.J."/>
            <person name="Zhuang X."/>
            <person name="Hogle J.M."/>
        </authorList>
    </citation>
    <scope>FUNCTION (CAPSID PROTEIN VP1)</scope>
</reference>
<reference key="36">
    <citation type="journal article" date="2007" name="EMBO J.">
        <title>Poliovirus entry into human brain microvascular cells requires receptor-induced activation of SHP-2.</title>
        <authorList>
            <person name="Coyne C.B."/>
            <person name="Kim K.S."/>
            <person name="Bergelson J.M."/>
        </authorList>
    </citation>
    <scope>FUNCTION (CAPSID PROTEIN VP1)</scope>
    <source>
        <strain>Sabin 2</strain>
    </source>
</reference>
<reference key="37">
    <citation type="journal article" date="2007" name="J. Virol.">
        <title>Characterization of protein-protein interactions critical for poliovirus replication: analysis of 3AB and VPg binding to the RNA-dependent RNA polymerase.</title>
        <authorList>
            <person name="Strauss D.M."/>
            <person name="Wuttke D.S."/>
        </authorList>
    </citation>
    <scope>INTERACTION WITH RNA-DIRECTED RNA POLYMERASE (PROTEIN 3B)</scope>
    <scope>INTERACTION WITH PROTEIN 3B (RNA-DIRECTED RNA POLYMERASE)</scope>
</reference>
<reference key="38">
    <citation type="journal article" date="2007" name="Biochemistry">
        <title>Membrane topography of the hydrophobic anchor sequence of poliovirus 3A and 3AB proteins and the functional effect of 3A/3AB membrane association upon RNA replication.</title>
        <authorList>
            <person name="Fujita K."/>
            <person name="Krishnakumar S.S."/>
            <person name="Franco D."/>
            <person name="Paul A.V."/>
            <person name="London E."/>
            <person name="Wimmer E."/>
        </authorList>
    </citation>
    <scope>TOPOLOGY (PROTEIN 3A)</scope>
    <scope>TOPOLOGY (PROTEIN 3AB)</scope>
</reference>
<reference key="39">
    <citation type="journal article" date="2008" name="J. Virol.">
        <title>Cleavage of poly(A)-binding protein by poliovirus 3C proteinase inhibits viral internal ribosome entry site-mediated translation.</title>
        <authorList>
            <person name="Bonderoff J.M."/>
            <person name="Larey J.L."/>
            <person name="Lloyd R.E."/>
        </authorList>
    </citation>
    <scope>FUNCTION (PROTEASE 3C)</scope>
</reference>
<reference key="40">
    <citation type="journal article" date="2008" name="Virology">
        <title>Cleavage of eukaryotic initiation factor eIF5B by enterovirus 3C proteases.</title>
        <authorList>
            <person name="de Breyne S."/>
            <person name="Bonderoff J.M."/>
            <person name="Chumakov K.M."/>
            <person name="Lloyd R.E."/>
            <person name="Hellen C.U."/>
        </authorList>
    </citation>
    <scope>FUNCTION (PROTEASE 3C)</scope>
</reference>
<reference key="41">
    <citation type="journal article" date="2008" name="Trends Microbiol.">
        <title>New (fluorescent) light on poliovirus entry.</title>
        <authorList>
            <person name="Bergelson J.M."/>
        </authorList>
    </citation>
    <scope>FUNCTION (CAPSID PROTEIN VP1)</scope>
    <scope>FUNCTION (CAPSID PROTEIN VP2)</scope>
    <scope>FUNCTION (CAPSID PROTEIN VP3)</scope>
</reference>
<reference key="42">
    <citation type="journal article" date="2008" name="J. Virol.">
        <title>Functional analysis of picornavirus 2B proteins: effects on calcium homeostasis and intracellular protein trafficking.</title>
        <authorList>
            <person name="de Jong A.S."/>
            <person name="de Mattia F."/>
            <person name="Van Dommelen M.M."/>
            <person name="Lanke K."/>
            <person name="Melchers W.J."/>
            <person name="Willems P.H."/>
            <person name="van Kuppeveld F.J."/>
        </authorList>
    </citation>
    <scope>REVIEW (PROTEIN 2B)</scope>
</reference>
<reference key="43">
    <citation type="journal article" date="2008" name="J. Biol. Chem.">
        <title>Picornavirus genome replication. Identification of the surface of the poliovirus (PV) 3C dimer that interacts with PV 3Dpol during VPg uridylylation and construction of a structural model for the PV 3C2-3Dpol complex.</title>
        <authorList>
            <person name="Shen M."/>
            <person name="Reitman Z.J."/>
            <person name="Zhao Y."/>
            <person name="Moustafa I."/>
            <person name="Wang Q."/>
            <person name="Arnold J.J."/>
            <person name="Pathak H.B."/>
            <person name="Cameron C.E."/>
        </authorList>
    </citation>
    <scope>FUNCTION (PROTEASE 3C)</scope>
</reference>
<reference key="44">
    <citation type="journal article" date="2009" name="J. Cell Sci.">
        <title>RNA nuclear export is blocked by poliovirus 2A protease and is concomitant with nucleoporin cleavage.</title>
        <authorList>
            <person name="Castello A."/>
            <person name="Izquierdo J.M."/>
            <person name="Welnowska E."/>
            <person name="Carrasco L."/>
        </authorList>
    </citation>
    <scope>FUNCTION (PROTEIN 2A)</scope>
</reference>
<reference key="45">
    <citation type="journal article" date="2009" name="J. Biol. Chem.">
        <title>Poliovirus 2C protein forms homo-oligomeric structures required for ATPase activity.</title>
        <authorList>
            <person name="Adams P."/>
            <person name="Kandiah E."/>
            <person name="Effantin G."/>
            <person name="Steven A.C."/>
            <person name="Ehrenfeld E."/>
        </authorList>
    </citation>
    <scope>FUNCTION (PROTEIN 2C)</scope>
    <scope>CATALYTIC ACTIVITY (PROTEIN 2C)</scope>
    <scope>SUBUNIT (PROTEIN 2C)</scope>
    <scope>DOMAIN (PROTEIN 2C)</scope>
</reference>
<reference key="46">
    <citation type="journal article" date="2009" name="Int. J. Biochem. Cell Biol.">
        <title>Picornavirus RNA-dependent RNA polymerase.</title>
        <authorList>
            <person name="Kok C.C."/>
            <person name="McMinn P.C."/>
        </authorList>
    </citation>
    <scope>REVIEW (RNA-DIRECTED RNA POLYMERASE)</scope>
</reference>
<reference key="47">
    <citation type="journal article" date="2010" name="PLoS Pathog.">
        <title>Direct interaction between two viral proteins, the nonstructural protein 2C and the capsid protein VP3, is required for enterovirus morphogenesis.</title>
        <authorList>
            <person name="Liu Y."/>
            <person name="Wang C."/>
            <person name="Mueller S."/>
            <person name="Paul A.V."/>
            <person name="Wimmer E."/>
            <person name="Jiang P."/>
        </authorList>
    </citation>
    <scope>INTERACTION WITH PROTEIN 2C (CAPSID PROTEIN VP3)</scope>
    <scope>FUNCTION (CAPSID PROTEIN VP3)</scope>
    <scope>INTERACTION WITH CAPSID PROTEIN VP3 (PROTEIN 2C)</scope>
</reference>
<reference key="48">
    <citation type="journal article" date="2010" name="Peptides">
        <title>NMR solution structure of poliovirus uridylyated peptide linked to the genome (VPgpU).</title>
        <authorList>
            <person name="Schein C.H."/>
            <person name="Oezguen N."/>
            <person name="van der Heden van Noort G.J."/>
            <person name="Filippov D.V."/>
            <person name="Paul A."/>
            <person name="Kumar E."/>
            <person name="Braun W."/>
        </authorList>
    </citation>
    <scope>FUNCTION (VIRAL PROTEIN GENOME-LINKED)</scope>
</reference>
<reference key="49">
    <citation type="journal article" date="2010" name="RNA Biol.">
        <title>The twenty-nine amino acid C-terminal cytoplasmic domain of poliovirus 3AB is critical for nucleic acid chaperone activity.</title>
        <authorList>
            <person name="Gangaramani D.R."/>
            <person name="Eden E.L."/>
            <person name="Shah M."/>
            <person name="Destefano J.J."/>
        </authorList>
    </citation>
    <scope>FUNCTION (PROTEIN 3AB)</scope>
</reference>
<reference key="50">
    <citation type="journal article" date="2011" name="J. Virol.">
        <title>Membrane integration of poliovirus 2B viroporin.</title>
        <authorList>
            <person name="Martinez-Gil L."/>
            <person name="Bano-Polo M."/>
            <person name="Redondo N."/>
            <person name="Sanchez-Martinez S."/>
            <person name="Nieva J.L."/>
            <person name="Carrasco L."/>
            <person name="Mingarro I."/>
        </authorList>
    </citation>
    <scope>TOPOLOGY (PROTEIN 2B)</scope>
    <scope>FUNCTION (PROTEIN 2B)</scope>
</reference>
<reference key="51">
    <citation type="journal article" date="2011" name="J. Virol.">
        <title>Analysis of poliovirus protein 3A interactions with viral and cellular proteins in infected cells.</title>
        <authorList>
            <person name="Teterina N.L."/>
            <person name="Pinto Y."/>
            <person name="Weaver J.D."/>
            <person name="Jensen K.S."/>
            <person name="Ehrenfeld E."/>
        </authorList>
    </citation>
    <scope>INTERACTION WITH HOST GBF1 (PROTEIN 3A)</scope>
</reference>
<reference key="52">
    <citation type="journal article" date="2012" name="Proc. Natl. Acad. Sci. U.S.A.">
        <title>An RNA virus hijacks an incognito function of a DNA repair enzyme.</title>
        <authorList>
            <person name="Virgen-Slane R."/>
            <person name="Rozovics J.M."/>
            <person name="Fitzgerald K.D."/>
            <person name="Ngo T."/>
            <person name="Chou W."/>
            <person name="van der Heden van Noort G.J."/>
            <person name="Filippov D.V."/>
            <person name="Gershon P.D."/>
            <person name="Semler B.L."/>
        </authorList>
    </citation>
    <scope>FUNCTION (VIRAL PROTEIN GENOME-LINKED)</scope>
</reference>
<reference key="53">
    <citation type="journal article" date="2012" name="J. Virol.">
        <title>Alanine scanning of poliovirus 2CATPase reveals new genetic evidence that capsid protein/2CATPase interactions are essential for morphogenesis.</title>
        <authorList>
            <person name="Wang C."/>
            <person name="Jiang P."/>
            <person name="Sand C."/>
            <person name="Paul A.V."/>
            <person name="Wimmer E."/>
        </authorList>
    </citation>
    <scope>FUNCTION (PROTEIN 2C)</scope>
</reference>
<reference key="54">
    <citation type="journal article" date="2012" name="J. Virol.">
        <title>The 3A protein from multiple picornaviruses utilizes the golgi adaptor protein ACBD3 to recruit PI4KIIIbeta.</title>
        <authorList>
            <person name="Greninger A.L."/>
            <person name="Knudsen G.M."/>
            <person name="Betegon M."/>
            <person name="Burlingame A.L."/>
            <person name="Derisi J.L."/>
        </authorList>
    </citation>
    <scope>INTERACTION WITH HOST ACBD3 (PROTEIN 3A)</scope>
</reference>
<reference key="55">
    <citation type="journal article" date="2012" name="J. Mol. Graph. Model.">
        <title>Investigation of a predicted N-terminal amphipathic alpha-helix using atomistic molecular dynamics simulation of a complete prototype poliovirus virion.</title>
        <authorList>
            <person name="Roberts J.A."/>
            <person name="Kuiper M.J."/>
            <person name="Thorley B.R."/>
            <person name="Smooker P.M."/>
            <person name="Hung A."/>
        </authorList>
    </citation>
    <scope>CHARACTERIZATION OF N-TERMINUS (CAPSID PROTEIN VP1)</scope>
</reference>
<reference key="56">
    <citation type="journal article" date="2013" name="J. Virol.">
        <title>RNA transfer from poliovirus 135S particles across membranes is mediated by long umbilical connectors.</title>
        <authorList>
            <person name="Strauss M."/>
            <person name="Levy H.C."/>
            <person name="Bostina M."/>
            <person name="Filman D.J."/>
            <person name="Hogle J.M."/>
        </authorList>
    </citation>
    <scope>FUNCTION (CAPSID PROTEIN VP1)</scope>
    <scope>FUNCTION (CAPSID PROTEIN VP4)</scope>
</reference>
<reference key="57">
    <citation type="journal article" date="2013" name="J. Mol. Biol.">
        <title>Surface for catalysis by poliovirus RNA-dependent RNA polymerase.</title>
        <authorList>
            <person name="Wang J."/>
            <person name="Lyle J.M."/>
            <person name="Bullitt E."/>
        </authorList>
    </citation>
    <scope>MULTIMERIZATION (RNA-DIRECTED RNA POLYMERASE)</scope>
</reference>
<reference key="58">
    <citation type="journal article" date="2014" name="J. Virol.">
        <title>Enterovirus 2Apro targets MDA5 and MAVS in infected cells.</title>
        <authorList>
            <person name="Feng Q."/>
            <person name="Langereis M.A."/>
            <person name="Lork M."/>
            <person name="Nguyen M."/>
            <person name="Hato S.V."/>
            <person name="Lanke K."/>
            <person name="Emdad L."/>
            <person name="Bhoopathi P."/>
            <person name="Fisher P.B."/>
            <person name="Lloyd R.E."/>
            <person name="van Kuppeveld F.J."/>
        </authorList>
    </citation>
    <scope>FUNCTION (PROTEASE 2A)</scope>
    <scope>FUNCTION (PROTEASE 3C)</scope>
</reference>
<reference key="59">
    <citation type="journal article" date="2015" name="Viruses">
        <title>Multiple Poliovirus Proteins Repress Cytoplasmic RNA Granules.</title>
        <authorList>
            <person name="Dougherty J.D."/>
            <person name="Tsai W.C."/>
            <person name="Lloyd R.E."/>
        </authorList>
    </citation>
    <scope>FUNCTION (PROTEASE 3C)</scope>
</reference>
<reference key="60">
    <citation type="journal article" date="2019" name="MBio">
        <title>ACBD3 is an essential pan-enterovirus host factor that mediates the interaction between viral 3A protein and cellular protein PI4KB.</title>
        <authorList>
            <person name="Lyoo H."/>
            <person name="van der Schaar H.M."/>
            <person name="Dorobantu C.M."/>
            <person name="Rabouw H.H."/>
            <person name="Strating J.R.P.M."/>
            <person name="van Kuppeveld F.J.M."/>
        </authorList>
    </citation>
    <scope>FUNCTION (PROTEIN 3A)</scope>
</reference>
<reference key="61">
    <citation type="journal article" date="2020" name="Viruses">
        <title>Effects of TDP2/VPg Unlinkase Activity on Picornavirus Infections Downstream of Virus Translation.</title>
        <authorList>
            <person name="Holmes A.C."/>
            <person name="Zagnoli-Vieira G."/>
            <person name="Caldecott K.W."/>
            <person name="Semler B.L."/>
        </authorList>
    </citation>
    <scope>FUNCTION (VIRAL PROTEIN GENOME-LINKED)</scope>
</reference>
<reference key="62">
    <citation type="journal article" date="1985" name="Science">
        <title>Three-dimensional structure of poliovirus at 2.9-A resolution.</title>
        <authorList>
            <person name="Hogle J.M."/>
            <person name="Chow M."/>
            <person name="Filman D.J."/>
        </authorList>
    </citation>
    <scope>X-RAY CRYSTALLOGRAPHY (2.9 ANGSTROMS) OF 1-881</scope>
    <scope>INTERACTION WITH CAPSID PROTEIN VP0 (CAPSID PROTEIN VP1)</scope>
    <scope>INTERACTION WITH CAPSID PROTEIN VP4 (CAPSID PROTEIN VP1)</scope>
    <scope>INTERACTION WITH CAPSID PROTEIN VP1 (CAPSID PROTEIN VP0)</scope>
    <scope>INTERACTION WITH CAPSID PROTEIN VP3 (CAPSID PROTEIN VP0)</scope>
    <scope>INTERACTION WITH CAPSID PROTEIN VP1 (CAPSID PROTEIN VP2)</scope>
    <scope>INTERACTION WITH CAPSID PROTEIN VP3 (CAPSID PROTEIN VP2)</scope>
    <scope>INTERACTION WITH CAPSID PROTEIN VP1 (CAPSID PROTEIN VP3)</scope>
    <scope>INTERACTION WITH CAPSID PROTEIN VP0 (CAPSID PROTEIN VP3)</scope>
    <scope>INTERACTION WITH CAPSID PROTEIN VP1 (CAPSID PROTEIN VP4)</scope>
    <scope>INTERACTION WITH CAPSID PROTEIN VP3 (CAPSID PROTEIN VP4)</scope>
    <scope>INTERACTION WITH CAPSID PROTEIN VP4 (CAPSID PROTEIN VP3)</scope>
    <scope>INTERACTION WITH CAPSID PROTEIN VP2 (CAPSID PROTEIN VP3)</scope>
    <scope>FUNCTION (CAPSID PROTEIN VP1)</scope>
    <scope>FUNCTION (CAPSID PROTEIN VP2)</scope>
    <scope>FUNCTION (CAPSID PROTEIN VP3)</scope>
</reference>
<reference key="63">
    <citation type="journal article" date="1989" name="EMBO J.">
        <title>Structural factors that control conformational transitions and serotype specificity in type 3 poliovirus.</title>
        <authorList>
            <person name="Filman D.J."/>
            <person name="Syed R."/>
            <person name="Chow M."/>
            <person name="Macadam A.J."/>
            <person name="Minor P.D."/>
            <person name="Hogle J.M."/>
        </authorList>
    </citation>
    <scope>X-RAY CRYSTALLOGRAPHY (2.88 ANGSTROMS) OF 2-880</scope>
</reference>
<reference key="64">
    <citation type="journal article" date="1994" name="Protein Sci.">
        <title>Role and mechanism of the maturation cleavage of VP0 in poliovirus assembly: structure of the empty capsid assembly intermediate at 2.9 A resolution.</title>
        <authorList>
            <person name="Basavappa R."/>
            <person name="Syed R."/>
            <person name="Flore O."/>
            <person name="Icenogle J.P."/>
            <person name="Filman D.J."/>
            <person name="Hogle J.M."/>
        </authorList>
    </citation>
    <scope>X-RAY CRYSTALLOGRAPHY (2.8 ANGSTROMS) OF 2-880</scope>
    <scope>FUNCTION (CAPSID PROTEIN VP0)</scope>
</reference>
<reference key="65">
    <citation type="journal article" date="1994" name="Curr. Biol.">
        <title>Structures of poliovirus complexes with anti-viral drugs: implications for viral stability and drug design.</title>
        <authorList>
            <person name="Grant R.A."/>
            <person name="Hiremath C.N."/>
            <person name="Filman D.J."/>
            <person name="Syed R."/>
            <person name="Andries K."/>
            <person name="Hogle J.M."/>
        </authorList>
    </citation>
    <scope>X-RAY CRYSTALLOGRAPHY (2.9 ANGSTROMS) OF 1-881</scope>
</reference>
<reference key="66">
    <citation type="journal article" date="2000" name="Proc. Natl. Acad. Sci. U.S.A.">
        <title>Interaction of the poliovirus receptor with poliovirus.</title>
        <authorList>
            <person name="He Y."/>
            <person name="Bowman V.D."/>
            <person name="Mueller S."/>
            <person name="Bator C.M."/>
            <person name="Bella J."/>
            <person name="Peng X."/>
            <person name="Baker T.S."/>
            <person name="Wimmer E."/>
            <person name="Kuhn R.J."/>
            <person name="Rossmann M.G."/>
        </authorList>
    </citation>
    <scope>STRUCTURE BY ELECTRON MICROSCOPY (2.0 ANGSTROMS) OF 1-881</scope>
    <scope>MYRISTOYLATION AT GLY-2</scope>
    <scope>INTERACTION WITH HOST PVR (CAPSID PROTEIN VP1)</scope>
</reference>
<reference key="67">
    <citation type="journal article" date="2003" name="J. Virol.">
        <title>Complexes of poliovirus serotypes with their common cellular receptor, CD155.</title>
        <authorList>
            <person name="He Y."/>
            <person name="Mueller S."/>
            <person name="Chipman P.R."/>
            <person name="Bator C.M."/>
            <person name="Peng X."/>
            <person name="Bowman V.D."/>
            <person name="Mukhopadhyay S."/>
            <person name="Wimmer E."/>
            <person name="Kuhn R.J."/>
            <person name="Rossmann M.G."/>
        </authorList>
    </citation>
    <scope>STRUCTURE BY ELECTRON MICROSCOPY (15.0 ANGSTROMS) OF 2-881</scope>
</reference>
<reference key="68">
    <citation type="journal article" date="2005" name="J. Virol.">
        <title>The structure of the poliovirus 135S cell entry intermediate at 10-angstrom resolution reveals the location of an externalized polypeptide that binds to membranes.</title>
        <authorList>
            <person name="Bubeck D."/>
            <person name="Filman D.J."/>
            <person name="Cheng N."/>
            <person name="Steven A.C."/>
            <person name="Hogle J.M."/>
            <person name="Belnap D.M."/>
        </authorList>
    </citation>
    <scope>STRUCTURE BY ELECTRON MICROSCOPY (11.0 ANGSTROMS) OF 97-880</scope>
</reference>
<reference key="69">
    <citation type="journal article" date="2008" name="Proc. Natl. Acad. Sci. U.S.A.">
        <title>Crystal structure of CD155 and electron microscopic studies of its complexes with polioviruses.</title>
        <authorList>
            <person name="Zhang P."/>
            <person name="Mueller S."/>
            <person name="Morais M.C."/>
            <person name="Bator C.M."/>
            <person name="Bowman V.D."/>
            <person name="Hafenstein S."/>
            <person name="Wimmer E."/>
            <person name="Rossmann M.G."/>
        </authorList>
    </citation>
    <scope>STRUCTURE BY ELECTRON MICROSCOPY (8.0 ANGSTROMS) OF 2-881</scope>
</reference>
<reference key="70">
    <citation type="journal article" date="2010" name="J. Virol.">
        <title>Catching a virus in the act of RNA release: a novel poliovirus uncoating intermediate characterized by cryo-electron microscopy.</title>
        <authorList>
            <person name="Levy H.C."/>
            <person name="Bostina M."/>
            <person name="Filman D.J."/>
            <person name="Hogle J.M."/>
        </authorList>
    </citation>
    <scope>STRUCTURE BY ELECTRON MICROSCOPY OF 97-341 AND 647-881</scope>
</reference>
<reference evidence="76" key="71">
    <citation type="journal article" date="2010" name="Proc. Natl. Acad. Sci. U.S.A.">
        <title>Structural basis for active site closure by the poliovirus RNA-dependent RNA polymerase.</title>
        <authorList>
            <person name="Gong P."/>
            <person name="Peersen O.B."/>
        </authorList>
    </citation>
    <scope>X-RAY CRYSTALLOGRAPHY (2.70 ANGSTROMS) OF 1749-2209 IN COMPLEX WITH MAGNESIUM AND CTP</scope>
    <scope>COFACTOR (RNA-DIRECTED RNA POLYMERASE)</scope>
</reference>
<reference evidence="77 78 79 80 81" key="72">
    <citation type="journal article" date="2013" name="PLoS ONE">
        <title>Structures of coxsackievirus, rhinovirus, and poliovirus polymerase elongation complexes solved by engineering RNA mediated crystal contacts.</title>
        <authorList>
            <person name="Gong P."/>
            <person name="Kortus M.G."/>
            <person name="Nix J.C."/>
            <person name="Davis R.E."/>
            <person name="Peersen O.B."/>
        </authorList>
    </citation>
    <scope>X-RAY CRYSTALLOGRAPHY (2.40 ANGSTROMS) OF 1749-2209 IN COMPLEX WITH ZINC</scope>
    <scope>ZINC-BINDING</scope>
</reference>
<reference evidence="74 75" key="73">
    <citation type="journal article" date="2015" name="J. Virol.">
        <title>Nectin-like interactions between poliovirus and its receptor trigger conformational changes associated with cell entry.</title>
        <authorList>
            <person name="Strauss M."/>
            <person name="Filman D.J."/>
            <person name="Belnap D.M."/>
            <person name="Cheng N."/>
            <person name="Noel R.T."/>
            <person name="Hogle J.M."/>
        </authorList>
    </citation>
    <scope>STRUCTURE BY ELECTRON MICROSCOPY (3.70 ANGSTROMS) OF 2-881 IN COMPLEX WITH THE PVR RECEPTOR</scope>
    <scope>FUNCTION (CAPSID PROTEIN VP1)</scope>
    <scope>FUNCTION (CAPSID PROTEIN VP4)</scope>
</reference>
<reference evidence="82" key="74">
    <citation type="journal article" date="2018" name="PLoS Pathog.">
        <title>Crystal structure of a soluble fragment of poliovirus 2CATPase.</title>
        <authorList>
            <person name="Guan H."/>
            <person name="Tian J."/>
            <person name="Zhang C."/>
            <person name="Qin B."/>
            <person name="Cui S."/>
        </authorList>
    </citation>
    <scope>X-RAY CRYSTALLOGRAPHY (2.54 ANGSTROMS) OF 1243-1456 IN COMPLEX WITH ZINC</scope>
    <scope>SUBUNIT (PROTEIN 2C)</scope>
    <scope>CATALYTIC ACTIVITY (PROTEIN 2C)</scope>
    <scope>ZINC-FINGER (PROTEIN 2C)</scope>
    <scope>DOMAIN (PROTEIN 2C)</scope>
    <scope>FUNCTION (PROTEIN 2C)</scope>
    <scope>MUTAGENESIS OF LYS-1262; LEU-1268; ALA-1272; ASP-1304; ASN-1350; ARG-1368; CYS-1396; CYS-1399; PHE-1405; CYS-1408; LEU-1411; CYS-1413; CYS-1450; MET-1451; LEU-1454 AND PHE-1455</scope>
    <scope>BIOPHYSICOCHEMICAL PROPERTIES (PROTEIN 2C)</scope>
</reference>
<reference evidence="83" key="75">
    <citation type="journal article" date="2019" name="PLoS Pathog.">
        <title>Convergent evolution in the mechanisms of ACBD3 recruitment to picornavirus replication sites.</title>
        <authorList>
            <person name="Horova V."/>
            <person name="Lyoo H."/>
            <person name="Rozycki B."/>
            <person name="Chalupska D."/>
            <person name="Smola M."/>
            <person name="Humpolickova J."/>
            <person name="Strating J.R.P.M."/>
            <person name="van Kuppeveld F.J.M."/>
            <person name="Boura E."/>
            <person name="Klima M."/>
        </authorList>
    </citation>
    <scope>X-RAY CRYSTALLOGRAPHY (2.50 ANGSTROMS) OF 1457-1514</scope>
    <scope>INTERACTION WITH HOST ACBD3 (PROTEIN 3A)</scope>
    <scope>FUNCTION (PROTEIN 3A)</scope>
    <scope>SUBUNIT (PROTEIN 3A)</scope>
</reference>
<proteinExistence type="evidence at protein level"/>
<keyword id="KW-0002">3D-structure</keyword>
<keyword id="KW-1072">Activation of host autophagy by virus</keyword>
<keyword id="KW-0067">ATP-binding</keyword>
<keyword id="KW-0068">Autocatalytic cleavage</keyword>
<keyword id="KW-0167">Capsid protein</keyword>
<keyword id="KW-0191">Covalent protein-RNA linkage</keyword>
<keyword id="KW-0903">Direct protein sequencing</keyword>
<keyword id="KW-1262">Eukaryotic host gene expression shutoff by virus</keyword>
<keyword id="KW-1193">Eukaryotic host translation shutoff by virus</keyword>
<keyword id="KW-0347">Helicase</keyword>
<keyword id="KW-1035">Host cytoplasm</keyword>
<keyword id="KW-1036">Host cytoplasmic vesicle</keyword>
<keyword id="KW-1190">Host gene expression shutoff by virus</keyword>
<keyword id="KW-1043">Host membrane</keyword>
<keyword id="KW-1192">Host mRNA suppression by virus</keyword>
<keyword id="KW-1048">Host nucleus</keyword>
<keyword id="KW-0945">Host-virus interaction</keyword>
<keyword id="KW-0378">Hydrolase</keyword>
<keyword id="KW-1090">Inhibition of host innate immune response by virus</keyword>
<keyword id="KW-1097">Inhibition of host MAVS by virus</keyword>
<keyword id="KW-1089">Inhibition of host MDA5 by virus</keyword>
<keyword id="KW-1099">Inhibition of host mRNA nuclear export by virus</keyword>
<keyword id="KW-1088">Inhibition of host RIG-I by virus</keyword>
<keyword id="KW-1113">Inhibition of host RLR pathway by virus</keyword>
<keyword id="KW-0407">Ion channel</keyword>
<keyword id="KW-0406">Ion transport</keyword>
<keyword id="KW-0449">Lipoprotein</keyword>
<keyword id="KW-0460">Magnesium</keyword>
<keyword id="KW-0472">Membrane</keyword>
<keyword id="KW-0479">Metal-binding</keyword>
<keyword id="KW-0519">Myristate</keyword>
<keyword id="KW-0547">Nucleotide-binding</keyword>
<keyword id="KW-0548">Nucleotidyltransferase</keyword>
<keyword id="KW-0597">Phosphoprotein</keyword>
<keyword id="KW-1172">Pore-mediated penetration of viral genome into host cell</keyword>
<keyword id="KW-0645">Protease</keyword>
<keyword id="KW-1185">Reference proteome</keyword>
<keyword id="KW-0677">Repeat</keyword>
<keyword id="KW-0694">RNA-binding</keyword>
<keyword id="KW-0696">RNA-directed RNA polymerase</keyword>
<keyword id="KW-1143">T=pseudo3 icosahedral capsid protein</keyword>
<keyword id="KW-0788">Thiol protease</keyword>
<keyword id="KW-0808">Transferase</keyword>
<keyword id="KW-0813">Transport</keyword>
<keyword id="KW-1161">Viral attachment to host cell</keyword>
<keyword id="KW-0899">Viral immunoevasion</keyword>
<keyword id="KW-1182">Viral ion channel</keyword>
<keyword id="KW-1162">Viral penetration into host cytoplasm</keyword>
<keyword id="KW-0693">Viral RNA replication</keyword>
<keyword id="KW-0946">Virion</keyword>
<keyword id="KW-1164">Virus endocytosis by host</keyword>
<keyword id="KW-1160">Virus entry into host cell</keyword>
<keyword id="KW-0862">Zinc</keyword>
<keyword id="KW-0863">Zinc-finger</keyword>
<evidence type="ECO:0000250" key="1">
    <source>
        <dbReference type="UniProtKB" id="P03301"/>
    </source>
</evidence>
<evidence type="ECO:0000250" key="2">
    <source>
        <dbReference type="UniProtKB" id="P03303"/>
    </source>
</evidence>
<evidence type="ECO:0000250" key="3">
    <source>
        <dbReference type="UniProtKB" id="P03313"/>
    </source>
</evidence>
<evidence type="ECO:0000250" key="4">
    <source>
        <dbReference type="UniProtKB" id="P04936"/>
    </source>
</evidence>
<evidence type="ECO:0000250" key="5">
    <source>
        <dbReference type="UniProtKB" id="Q66478"/>
    </source>
</evidence>
<evidence type="ECO:0000255" key="6"/>
<evidence type="ECO:0000255" key="7">
    <source>
        <dbReference type="PROSITE-ProRule" id="PRU00539"/>
    </source>
</evidence>
<evidence type="ECO:0000255" key="8">
    <source>
        <dbReference type="PROSITE-ProRule" id="PRU00551"/>
    </source>
</evidence>
<evidence type="ECO:0000255" key="9">
    <source>
        <dbReference type="PROSITE-ProRule" id="PRU01222"/>
    </source>
</evidence>
<evidence type="ECO:0000256" key="10">
    <source>
        <dbReference type="SAM" id="MobiDB-lite"/>
    </source>
</evidence>
<evidence type="ECO:0000269" key="11">
    <source>
    </source>
</evidence>
<evidence type="ECO:0000269" key="12">
    <source>
    </source>
</evidence>
<evidence type="ECO:0000269" key="13">
    <source>
    </source>
</evidence>
<evidence type="ECO:0000269" key="14">
    <source>
    </source>
</evidence>
<evidence type="ECO:0000269" key="15">
    <source>
    </source>
</evidence>
<evidence type="ECO:0000269" key="16">
    <source>
    </source>
</evidence>
<evidence type="ECO:0000269" key="17">
    <source>
    </source>
</evidence>
<evidence type="ECO:0000269" key="18">
    <source>
    </source>
</evidence>
<evidence type="ECO:0000269" key="19">
    <source>
    </source>
</evidence>
<evidence type="ECO:0000269" key="20">
    <source>
    </source>
</evidence>
<evidence type="ECO:0000269" key="21">
    <source>
    </source>
</evidence>
<evidence type="ECO:0000269" key="22">
    <source>
    </source>
</evidence>
<evidence type="ECO:0000269" key="23">
    <source>
    </source>
</evidence>
<evidence type="ECO:0000269" key="24">
    <source>
    </source>
</evidence>
<evidence type="ECO:0000269" key="25">
    <source>
    </source>
</evidence>
<evidence type="ECO:0000269" key="26">
    <source>
    </source>
</evidence>
<evidence type="ECO:0000269" key="27">
    <source>
    </source>
</evidence>
<evidence type="ECO:0000269" key="28">
    <source>
    </source>
</evidence>
<evidence type="ECO:0000269" key="29">
    <source>
    </source>
</evidence>
<evidence type="ECO:0000269" key="30">
    <source>
    </source>
</evidence>
<evidence type="ECO:0000269" key="31">
    <source>
    </source>
</evidence>
<evidence type="ECO:0000269" key="32">
    <source>
    </source>
</evidence>
<evidence type="ECO:0000269" key="33">
    <source>
    </source>
</evidence>
<evidence type="ECO:0000269" key="34">
    <source>
    </source>
</evidence>
<evidence type="ECO:0000269" key="35">
    <source>
    </source>
</evidence>
<evidence type="ECO:0000269" key="36">
    <source>
    </source>
</evidence>
<evidence type="ECO:0000269" key="37">
    <source>
    </source>
</evidence>
<evidence type="ECO:0000269" key="38">
    <source>
    </source>
</evidence>
<evidence type="ECO:0000269" key="39">
    <source>
    </source>
</evidence>
<evidence type="ECO:0000269" key="40">
    <source>
    </source>
</evidence>
<evidence type="ECO:0000269" key="41">
    <source>
    </source>
</evidence>
<evidence type="ECO:0000269" key="42">
    <source>
    </source>
</evidence>
<evidence type="ECO:0000269" key="43">
    <source>
    </source>
</evidence>
<evidence type="ECO:0000269" key="44">
    <source>
    </source>
</evidence>
<evidence type="ECO:0000269" key="45">
    <source>
    </source>
</evidence>
<evidence type="ECO:0000269" key="46">
    <source>
    </source>
</evidence>
<evidence type="ECO:0000269" key="47">
    <source>
    </source>
</evidence>
<evidence type="ECO:0000269" key="48">
    <source>
    </source>
</evidence>
<evidence type="ECO:0000269" key="49">
    <source>
    </source>
</evidence>
<evidence type="ECO:0000269" key="50">
    <source>
    </source>
</evidence>
<evidence type="ECO:0000269" key="51">
    <source>
    </source>
</evidence>
<evidence type="ECO:0000269" key="52">
    <source>
    </source>
</evidence>
<evidence type="ECO:0000269" key="53">
    <source>
    </source>
</evidence>
<evidence type="ECO:0000269" key="54">
    <source>
    </source>
</evidence>
<evidence type="ECO:0000269" key="55">
    <source>
    </source>
</evidence>
<evidence type="ECO:0000269" key="56">
    <source>
    </source>
</evidence>
<evidence type="ECO:0000269" key="57">
    <source>
    </source>
</evidence>
<evidence type="ECO:0000269" key="58">
    <source>
    </source>
</evidence>
<evidence type="ECO:0000269" key="59">
    <source>
    </source>
</evidence>
<evidence type="ECO:0000269" key="60">
    <source>
    </source>
</evidence>
<evidence type="ECO:0000269" key="61">
    <source>
    </source>
</evidence>
<evidence type="ECO:0000269" key="62">
    <source>
    </source>
</evidence>
<evidence type="ECO:0000269" key="63">
    <source>
    </source>
</evidence>
<evidence type="ECO:0000269" key="64">
    <source>
    </source>
</evidence>
<evidence type="ECO:0000305" key="65"/>
<evidence type="ECO:0000305" key="66">
    <source>
    </source>
</evidence>
<evidence type="ECO:0000305" key="67">
    <source>
    </source>
</evidence>
<evidence type="ECO:0000305" key="68">
    <source>
    </source>
</evidence>
<evidence type="ECO:0000305" key="69">
    <source>
    </source>
</evidence>
<evidence type="ECO:0000305" key="70">
    <source>
    </source>
</evidence>
<evidence type="ECO:0000305" key="71">
    <source>
    </source>
</evidence>
<evidence type="ECO:0000305" key="72">
    <source>
    </source>
</evidence>
<evidence type="ECO:0000305" key="73">
    <source>
    </source>
</evidence>
<evidence type="ECO:0007744" key="74">
    <source>
        <dbReference type="PDB" id="3J8F"/>
    </source>
</evidence>
<evidence type="ECO:0007744" key="75">
    <source>
        <dbReference type="PDB" id="3J9F"/>
    </source>
</evidence>
<evidence type="ECO:0007744" key="76">
    <source>
        <dbReference type="PDB" id="3OL7"/>
    </source>
</evidence>
<evidence type="ECO:0007744" key="77">
    <source>
        <dbReference type="PDB" id="4K4S"/>
    </source>
</evidence>
<evidence type="ECO:0007744" key="78">
    <source>
        <dbReference type="PDB" id="4K4T"/>
    </source>
</evidence>
<evidence type="ECO:0007744" key="79">
    <source>
        <dbReference type="PDB" id="4K4U"/>
    </source>
</evidence>
<evidence type="ECO:0007744" key="80">
    <source>
        <dbReference type="PDB" id="4K4V"/>
    </source>
</evidence>
<evidence type="ECO:0007744" key="81">
    <source>
        <dbReference type="PDB" id="4K4W"/>
    </source>
</evidence>
<evidence type="ECO:0007744" key="82">
    <source>
        <dbReference type="PDB" id="5Z3Q"/>
    </source>
</evidence>
<evidence type="ECO:0007744" key="83">
    <source>
        <dbReference type="PDB" id="6HLV"/>
    </source>
</evidence>
<evidence type="ECO:0007829" key="84">
    <source>
        <dbReference type="PDB" id="1AL2"/>
    </source>
</evidence>
<evidence type="ECO:0007829" key="85">
    <source>
        <dbReference type="PDB" id="1AR7"/>
    </source>
</evidence>
<evidence type="ECO:0007829" key="86">
    <source>
        <dbReference type="PDB" id="1HXS"/>
    </source>
</evidence>
<evidence type="ECO:0007829" key="87">
    <source>
        <dbReference type="PDB" id="1POV"/>
    </source>
</evidence>
<evidence type="ECO:0007829" key="88">
    <source>
        <dbReference type="PDB" id="1RA6"/>
    </source>
</evidence>
<evidence type="ECO:0007829" key="89">
    <source>
        <dbReference type="PDB" id="1RDR"/>
    </source>
</evidence>
<evidence type="ECO:0007829" key="90">
    <source>
        <dbReference type="PDB" id="1TQL"/>
    </source>
</evidence>
<evidence type="ECO:0007829" key="91">
    <source>
        <dbReference type="PDB" id="2BBL"/>
    </source>
</evidence>
<evidence type="ECO:0007829" key="92">
    <source>
        <dbReference type="PDB" id="2IM0"/>
    </source>
</evidence>
<evidence type="ECO:0007829" key="93">
    <source>
        <dbReference type="PDB" id="2PLV"/>
    </source>
</evidence>
<evidence type="ECO:0007829" key="94">
    <source>
        <dbReference type="PDB" id="4DCD"/>
    </source>
</evidence>
<evidence type="ECO:0007829" key="95">
    <source>
        <dbReference type="PDB" id="4K4S"/>
    </source>
</evidence>
<evidence type="ECO:0007829" key="96">
    <source>
        <dbReference type="PDB" id="4K4V"/>
    </source>
</evidence>
<evidence type="ECO:0007829" key="97">
    <source>
        <dbReference type="PDB" id="4NLR"/>
    </source>
</evidence>
<evidence type="ECO:0007829" key="98">
    <source>
        <dbReference type="PDB" id="4NLV"/>
    </source>
</evidence>
<evidence type="ECO:0007829" key="99">
    <source>
        <dbReference type="PDB" id="5Z3Q"/>
    </source>
</evidence>
<evidence type="ECO:0007829" key="100">
    <source>
        <dbReference type="PDB" id="6HLV"/>
    </source>
</evidence>
<evidence type="ECO:0007829" key="101">
    <source>
        <dbReference type="PDB" id="6P9O"/>
    </source>
</evidence>
<evidence type="ECO:0007829" key="102">
    <source>
        <dbReference type="PDB" id="6P9W"/>
    </source>
</evidence>
<evidence type="ECO:0007829" key="103">
    <source>
        <dbReference type="PDB" id="6PSZ"/>
    </source>
</evidence>
<organism>
    <name type="scientific">Poliovirus type 1 (strain Mahoney)</name>
    <dbReference type="NCBI Taxonomy" id="12081"/>
    <lineage>
        <taxon>Viruses</taxon>
        <taxon>Riboviria</taxon>
        <taxon>Orthornavirae</taxon>
        <taxon>Pisuviricota</taxon>
        <taxon>Pisoniviricetes</taxon>
        <taxon>Picornavirales</taxon>
        <taxon>Picornaviridae</taxon>
        <taxon>Ensavirinae</taxon>
        <taxon>Enterovirus</taxon>
        <taxon>Enterovirus C</taxon>
    </lineage>
</organism>